<organism>
    <name type="scientific">Human hepatitis A virus genotype IB (isolate HM175)</name>
    <name type="common">HHAV</name>
    <name type="synonym">Human hepatitis A virus (isolate Human/Australia/HM175/1976)</name>
    <dbReference type="NCBI Taxonomy" id="12098"/>
    <lineage>
        <taxon>Viruses</taxon>
        <taxon>Riboviria</taxon>
        <taxon>Orthornavirae</taxon>
        <taxon>Pisuviricota</taxon>
        <taxon>Pisoniviricetes</taxon>
        <taxon>Picornavirales</taxon>
        <taxon>Picornaviridae</taxon>
        <taxon>Heptrevirinae</taxon>
        <taxon>Hepatovirus</taxon>
        <taxon>Hepatovirus ahepa</taxon>
        <taxon>Hepatovirus A</taxon>
    </lineage>
</organism>
<organismHost>
    <name type="scientific">Cercopithecus hamlyni</name>
    <name type="common">Owl-faced monkey</name>
    <name type="synonym">Hamlyn's monkey</name>
    <dbReference type="NCBI Taxonomy" id="9536"/>
</organismHost>
<organismHost>
    <name type="scientific">Homo sapiens</name>
    <name type="common">Human</name>
    <dbReference type="NCBI Taxonomy" id="9606"/>
</organismHost>
<organismHost>
    <name type="scientific">Macaca</name>
    <name type="common">macaques</name>
    <dbReference type="NCBI Taxonomy" id="9539"/>
</organismHost>
<organismHost>
    <name type="scientific">Pan troglodytes</name>
    <name type="common">Chimpanzee</name>
    <dbReference type="NCBI Taxonomy" id="9598"/>
</organismHost>
<comment type="function">
    <molecule>Capsid protein VP1</molecule>
    <text evidence="10 26 29 31 42">Capsid proteins VP1, VP2, and VP3 form a closed capsid enclosing the viral positive strand RNA genome (PubMed:25327248, PubMed:28074040). All these proteins contain a beta-sheet structure called beta-barrel jelly roll (PubMed:25327248). Together they form an icosahedral capsid (T=3) composed of 60 copies of each VP1, VP2, and VP3, with a diameter of approximately 300 Angstroms (PubMed:25327248). VP1 is situated at the 12 fivefold axes, whereas VP2 and VP3 are located at the quasi-sixfold axes (PubMed:25327248). The naked capsid interacts with the host receptor HAVCR1 to provide virion attachment to and probably entry into the target cell (PubMed:11134285, PubMed:29437974, PubMed:9658108).</text>
</comment>
<comment type="function">
    <molecule>Capsid protein VP2</molecule>
    <text evidence="10 26 29 31 42">Capsid proteins VP1, VP2, and VP3 form a closed capsid enclosing the viral positive strand RNA genome (PubMed:25327248, PubMed:28074040). All these proteins contain a beta-sheet structure called beta-barrel jelly roll (PubMed:25327248). Together they form an icosahedral capsid (T=3) composed of 60 copies of each VP1, VP2, and VP3, with a diameter of approximately 300 Angstroms (PubMed:25327248). VP1 is situated at the 12 fivefold axes, whereas VP2 and VP3 are located at the quasi-sixfold axes (PubMed:25327248). The naked capsid interacts with the host receptor HAVCR1 to provide virion attachment to and probably entry into the target cell (PubMed:11134285, PubMed:29437974, PubMed:9658108).</text>
</comment>
<comment type="function">
    <molecule>Capsid protein VP3</molecule>
    <text evidence="10 26 29 31 42">Capsid proteins VP1, VP2, and VP3 form a closed capsid enclosing the viral positive strand RNA genome (PubMed:25327248, PubMed:28074040). All these proteins contain a beta-sheet structure called beta-barrel jelly roll (PubMed:25327248). Together they form an icosahedral capsid (T=3) composed of 60 copies of each VP1, VP2, and VP3, with a diameter of approximately 300 Angstroms (PubMed:25327248). VP1 is situated at the 12 fivefold axes, whereas VP2 and VP3 are located at the quasi-sixfold axes (PubMed:25327248). The naked capsid interacts with the host receptor HAVCR1 to provide virion attachment to and probably entry into the target cell (PubMed:11134285, PubMed:29437974, PubMed:9658108).</text>
</comment>
<comment type="function">
    <molecule>Capsid protein VP0</molecule>
    <text evidence="26">VP0 precursor is a component of the immature procapsids.</text>
</comment>
<comment type="function">
    <molecule>Capsid protein VP4</molecule>
    <text evidence="46">Plays a role in the assembly of the 12 pentamers into an icosahedral structure. Has not been detected in mature virions, supposedly owing to its small size.</text>
</comment>
<comment type="function">
    <molecule>Protein VP1-2A</molecule>
    <text evidence="11 46">Precursor component of immature procapsids that corresponds to an extended form of the structural protein VP1 (PubMed:12097562, PubMed:9988685). After maturation, possibly by the host Cathepsin L, the assembly signal 2A is cleaved to give rise to the mature VP1 protein (PubMed:9988685).</text>
</comment>
<comment type="function">
    <molecule>Protein 2B</molecule>
    <text evidence="18 20 28 40 45">Functions as a viroporin (PubMed:26515753). Affects membrane integrity and causes an increase in membrane permeability (PubMed:9875331). Involved in host intracellular membrane rearrangements probably to give rise to the viral factories (PubMed:9344908). Does not disrupt calcium homeostasis or glycoprotein trafficking (PubMed:18216106). Antagonizes the innate immune response of the host by suppressing IFN-beta synthesis, which it achieves by interfering with the RIG-I/IFIH1 pathway (PubMed:18559929).</text>
</comment>
<comment type="function">
    <molecule>Protein 2BC</molecule>
    <text evidence="40 45">Affects membrane integrity and causes an increase in membrane permeability.</text>
</comment>
<comment type="function">
    <molecule>Protein 2C</molecule>
    <text evidence="40 41">Associates with and induces structural rearrangements of intracellular membranes (PubMed:9344908). Displays RNA-binding activity (PubMed:9645199).</text>
</comment>
<comment type="function">
    <molecule>Protein 3ABC</molecule>
    <text evidence="8 16">The precursor 3ABC is targeted to the mitochondrial membrane where protease 3C activity cleaves and inhibits the host antiviral protein MAVS, thereby disrupting activation of IRF3 through the IFIH1/MDA5 pathway (PubMed:17438296). In vivo, the protease activity of 3ABC precursor is more efficient in cleaving the 2BC precursor than that of protein 3C. The 3ABC precursor may therefore play a role in the proteolytic processing of the polyprotein (PubMed:10559299).</text>
</comment>
<comment type="function">
    <molecule>Protein 3AB</molecule>
    <text evidence="9 43">Interacts with the 3CD precursor and with RNA structures found at both the 5'- and 3'-termini of the viral genome (PubMed:10562502). Since the 3AB precursor contains the hydrophobic domain 3A, it probably anchors the whole viral replicase complex to intracellular membranes on which viral RNA synthesis occurs (PubMed:9705870).</text>
</comment>
<comment type="function">
    <molecule>Protein 3A</molecule>
    <text evidence="9 43">May serve as membrane anchor to the 3AB and 3ABC precursors via its hydrophobic domain (PubMed:9705870). May interact with RNA (PubMed:10562502).</text>
</comment>
<comment type="function">
    <molecule>Viral protein genome-linked</molecule>
    <text evidence="2 49">Acts as a primer for viral RNA replication and remains covalently bound to viral genomic RNA. VPg is uridylylated prior to priming replication into VPg-pUpU. The VPg-pUpU is then used as primer on the genomic RNA poly(A) by the RNA-dependent RNA polymerase to replicate the viral genome.</text>
</comment>
<comment type="function">
    <molecule>Protease 3C</molecule>
    <text evidence="15 17 19 25 38">Cysteine protease that generates mature viral proteins from the precursor polyprotein (PubMed:1850033). In addition to its proteolytic activity, it binds to viral RNA, and thus influences viral genome replication (PubMed:15361063). RNA and substrate bind cooperatively to the protease (PubMed:9032381). Cleaves IKBKG/NEMO to impair innate immune signaling (PubMed:24920812). Cleaves host PABPC1 which may participate in the switch of viral translation to RNA synthesis (PubMed:17726047).</text>
</comment>
<comment type="function">
    <molecule>Protein 3CD</molecule>
    <text evidence="9 22">Interacts with the 3AB precursor and with RNA structures found at both the 5'- and 3'-termini of the viral genome (PubMed:10562502). Disrupts TLR3 signaling by degrading the host adapter protein TICAM1/TRIF (PubMed:21931545).</text>
</comment>
<comment type="function">
    <text evidence="50">RNA-directed RNA polymerase 3D-POL replicates genomic and antigenomic RNA by recognizing replications specific signals.</text>
</comment>
<comment type="catalytic activity">
    <reaction evidence="4 35">
        <text>RNA(n) + a ribonucleoside 5'-triphosphate = RNA(n+1) + diphosphate</text>
        <dbReference type="Rhea" id="RHEA:21248"/>
        <dbReference type="Rhea" id="RHEA-COMP:14527"/>
        <dbReference type="Rhea" id="RHEA-COMP:17342"/>
        <dbReference type="ChEBI" id="CHEBI:33019"/>
        <dbReference type="ChEBI" id="CHEBI:61557"/>
        <dbReference type="ChEBI" id="CHEBI:140395"/>
        <dbReference type="EC" id="2.7.7.48"/>
    </reaction>
</comment>
<comment type="catalytic activity">
    <reaction>
        <text>a ribonucleoside 5'-triphosphate + H2O = a ribonucleoside 5'-diphosphate + phosphate + H(+)</text>
        <dbReference type="Rhea" id="RHEA:23680"/>
        <dbReference type="ChEBI" id="CHEBI:15377"/>
        <dbReference type="ChEBI" id="CHEBI:15378"/>
        <dbReference type="ChEBI" id="CHEBI:43474"/>
        <dbReference type="ChEBI" id="CHEBI:57930"/>
        <dbReference type="ChEBI" id="CHEBI:61557"/>
        <dbReference type="EC" id="3.6.1.15"/>
    </reaction>
</comment>
<comment type="catalytic activity">
    <reaction evidence="6 19">
        <text>Selective cleavage of Gln-|-Gly bond in the poliovirus polyprotein. In other picornavirus reactions Glu may be substituted for Gln, and Ser or Thr for Gly.</text>
        <dbReference type="EC" id="3.4.22.28"/>
    </reaction>
</comment>
<comment type="subunit">
    <molecule>Protein 2B</molecule>
    <text evidence="27 28 50">Homodimer. Homomultimer; probably interacts with membranes in a multimeric form (PubMed:26515753). Seems to assemble into amyloid-like fibers (PubMed:25589659).</text>
</comment>
<comment type="subunit">
    <molecule>Protein 3A</molecule>
    <text evidence="24">Interacts with host ACBD3 (PubMed:23572552).</text>
</comment>
<comment type="subunit">
    <molecule>Protein 3AB</molecule>
    <text evidence="9 43 50">Homodimer. Monomer (PubMed:9705870). Interacts with protein 3CD (PubMed:10562502).</text>
</comment>
<comment type="subunit">
    <molecule>Protein 3CD</molecule>
    <text evidence="9">Interacts with protein 3AB (PubMed:10562502).</text>
</comment>
<comment type="subunit">
    <molecule>Protein 3ABC</molecule>
    <text evidence="16">Interacts with human MAVS (PubMed:17438296).</text>
</comment>
<comment type="subunit">
    <molecule>Protease 3C</molecule>
    <text evidence="15">Homodimer; disulfide-linked (PubMed:15361063).</text>
</comment>
<comment type="subunit">
    <molecule>Protein VP1-2A</molecule>
    <text evidence="12 21">Homopentamer (PubMed:12782637). Homooligomer (PubMed:12782637, PubMed:18823593).</text>
</comment>
<comment type="subunit">
    <molecule>Capsid protein VP1</molecule>
    <text evidence="26">Interacts with capsid protein VP2 (PubMed:25327248, PubMed:28074040). Interacts with capsid protein VP3 (PubMed:25327248, PubMed:28074040).</text>
</comment>
<comment type="subunit">
    <molecule>Capsid protein VP2</molecule>
    <text evidence="26">Interacts with capsid protein VP1 (PubMed:25327248, PubMed:28074040). Interacts with capsid protein VP3 (PubMed:25327248, PubMed:28074040).</text>
</comment>
<comment type="subunit">
    <molecule>Capsid protein VP3</molecule>
    <text evidence="26">Interacts with capsid protein VP1 (PubMed:25327248, PubMed:28074040). Interacts with capsid protein VP2 (PubMed:25327248, PubMed:28074040).</text>
</comment>
<comment type="subcellular location">
    <molecule>Capsid protein VP2</molecule>
    <subcellularLocation>
        <location evidence="26 29">Virion</location>
    </subcellularLocation>
    <subcellularLocation>
        <location evidence="30">Host endosome</location>
        <location evidence="30">Host multivesicular body</location>
    </subcellularLocation>
    <text evidence="30">The egress of newly formed virions occurs through an exosome-like mechanism involving endosomal budding of viral capsids into multivesicular bodies.</text>
</comment>
<comment type="subcellular location">
    <molecule>Capsid protein VP3</molecule>
    <subcellularLocation>
        <location evidence="26 29">Virion</location>
    </subcellularLocation>
    <subcellularLocation>
        <location evidence="30">Host endosome</location>
        <location evidence="30">Host multivesicular body</location>
    </subcellularLocation>
    <text evidence="30">The egress of newly formed virions occurs through an exosome-like mechanism involving endosomal budding of viral capsids into multivesicular bodies.</text>
</comment>
<comment type="subcellular location">
    <molecule>Capsid protein VP1</molecule>
    <subcellularLocation>
        <location evidence="26 29">Virion</location>
    </subcellularLocation>
    <subcellularLocation>
        <location evidence="30">Host endosome</location>
        <location evidence="30">Host multivesicular body</location>
    </subcellularLocation>
    <text evidence="30">The egress of newly formed virions occurs through an exosome-like mechanism involving endosomal budding of viral capsids into multivesicular bodies.</text>
</comment>
<comment type="subcellular location">
    <molecule>Capsid protein VP4</molecule>
    <subcellularLocation>
        <location evidence="26">Virion</location>
    </subcellularLocation>
    <text evidence="26 51">Present in the full mature virion (PubMed:25327248). The egress of newly formed virions occurs through an exosome-like mechanism involving endosomal budding of viral capsids into multivesicular bodies (Probable).</text>
</comment>
<comment type="subcellular location">
    <molecule>Protein 2B</molecule>
    <subcellularLocation>
        <location evidence="18 28 45">Host membrane</location>
        <topology evidence="45">Peripheral membrane protein</topology>
    </subcellularLocation>
    <text evidence="50">Probably localizes to intracellular membrane vesicles that are induced after virus infection as the site for viral RNA replication.</text>
</comment>
<comment type="subcellular location">
    <molecule>Protein 2C</molecule>
    <subcellularLocation>
        <location evidence="41">Host membrane</location>
        <topology evidence="45">Single-pass membrane protein</topology>
    </subcellularLocation>
    <text evidence="52">Probably localizes to intracellular membrane vesicles that are induced after virus infection as the site for viral RNA replication. May associate with membranes through a N-terminal amphipathic helix.</text>
</comment>
<comment type="subcellular location">
    <molecule>Protein 3ABC</molecule>
    <subcellularLocation>
        <location evidence="50">Host membrane</location>
        <topology evidence="3">Single-pass membrane protein</topology>
    </subcellularLocation>
    <subcellularLocation>
        <location evidence="16">Host mitochondrion outer membrane</location>
        <topology evidence="50">Single-pass membrane protein</topology>
    </subcellularLocation>
    <text evidence="50">Probably localizes to intracellular membrane vesicles that are induced after virus infection as the site for viral RNA replication.</text>
</comment>
<comment type="subcellular location">
    <molecule>Protein 3AB</molecule>
    <subcellularLocation>
        <location evidence="50">Host membrane</location>
        <topology evidence="3">Single-pass membrane protein</topology>
    </subcellularLocation>
    <text evidence="50">Probably localizes to intracellular membrane vesicles that are induced after virus infection as the site for viral RNA replication.</text>
</comment>
<comment type="subcellular location">
    <molecule>Protein 3A</molecule>
    <subcellularLocation>
        <location evidence="50">Host membrane</location>
        <topology evidence="3">Single-pass membrane protein</topology>
    </subcellularLocation>
    <text evidence="50">Probably localizes to intracellular membrane vesicles that are induced after virus infection as the site for viral RNA replication.</text>
</comment>
<comment type="subcellular location">
    <molecule>Viral protein genome-linked</molecule>
    <subcellularLocation>
        <location evidence="50">Virion</location>
    </subcellularLocation>
</comment>
<comment type="subcellular location">
    <molecule>Protease 3C</molecule>
    <subcellularLocation>
        <location evidence="50">Host cytoplasm</location>
    </subcellularLocation>
</comment>
<comment type="subcellular location">
    <molecule>RNA-directed RNA polymerase 3D-POL</molecule>
    <subcellularLocation>
        <location evidence="50">Host cytoplasmic vesicle membrane</location>
        <topology evidence="50">Peripheral membrane protein</topology>
        <orientation evidence="50">Cytoplasmic side</orientation>
    </subcellularLocation>
    <text evidence="50">Interacts with membranes in a complex with viral protein 3AB. Probably localizes to the surface of intracellular membrane vesicles that are induced after virus infection as the site for viral RNA replication. These vesicles are derived from the endoplasmic reticulum.</text>
</comment>
<comment type="domain">
    <molecule>Protein VP1-2A</molecule>
    <text evidence="11 12">The assembly signal 2A region mediates pentamerization of P1-2A.</text>
</comment>
<comment type="domain">
    <molecule>Genome polyprotein</molecule>
    <text evidence="23 50">Late-budding domains (L domains) are short sequence motifs essential for viral particle budding (Probable). They recruit proteins of the host ESCRT machinery (Endosomal Sorting Complex Required for Transport) or ESCRT-associated proteins (Probable). The genome polyprotein contains two L domains: a tandem of (L)YPX(n)L domain which is known to bind the PDCD6IP/ALIX adaptater protein (PubMed:23542590).</text>
</comment>
<comment type="domain">
    <molecule>Capsid protein VP2</molecule>
    <text evidence="23 50">Late-budding domains (L domains) are short sequence motifs essential for viral particle budding (Probable). They recruit proteins of the host ESCRT machinery (Endosomal Sorting Complex Required for Transport) or ESCRT-associated proteins (Probable). Capsid protein VP2 contains two L domains: a tandem of (L)YPX(n)L domain which is known to bind the Alix adaptater protein (PubMed:23542590).</text>
</comment>
<comment type="domain">
    <molecule>Protein 2B</molecule>
    <text evidence="28">The C-terminus displays a membrane-penetrating ability.</text>
</comment>
<comment type="PTM">
    <molecule>Genome polyprotein</molecule>
    <text evidence="7 8 19 21 32 33 34 35 36 39 44">Specific enzymatic cleavages by viral protease in vivo yield a variety of precursors and mature proteins. Polyprotein processing intermediates are produced, such as P1-2A which is a functional precursor of the structural proteins, VP0 which is a VP4-VP2 precursor, VP1-2A precursor, 3ABC precursor which is a stable and catalytically active precursor of 3A, 3B and 3C proteins, 3AB and 3CD precursors (PubMed:10559299, PubMed:1850033, PubMed:7483265, PubMed:7853510, PubMed:8259663, PubMed:8291234, PubMed:8382411, PubMed:9060697, PubMed:9733840). The assembly signal 2A is removed from VP1-2A by a host protease, possibly host Cathepsin L (PubMed:18823593). This cleavage occurs over a region of 3 amino-acids probably generating VP1 proteins with heterogeneous C-termini (PubMed:10364353).</text>
</comment>
<comment type="PTM">
    <molecule>Capsid protein VP0</molecule>
    <text evidence="12 35 39 44">During virion maturation, immature virions are rendered infectious following cleavage of VP0 into VP4 and VP2. This maturation seems to be an autocatalytic event triggered by the presence of RNA in the capsid and is followed by a conformational change of the particle (PubMed:12782637, PubMed:8291234, PubMed:9060697, PubMed:9733840).</text>
</comment>
<comment type="PTM">
    <molecule>Protein VP1-2A</molecule>
    <text evidence="7 21 30">The assembly signal 2A is removed from VP1-2A by a host protease, possibly host Cathepsin L in naked virions (PubMed:18823593). This cleavage does not occur in enveloped virions (PubMed:28490497). This cleavage occurs over a region of 3 amino-acids probably generating VP1 proteins with heterogeneous C-termini (PubMed:10364353).</text>
</comment>
<comment type="PTM">
    <molecule>Viral protein genome-linked</molecule>
    <text evidence="2">VPg is uridylylated prior to priming replication into VPg-pUpU.</text>
</comment>
<comment type="PTM">
    <molecule>Capsid protein VP4</molecule>
    <text evidence="37">Unlike other picornaviruses, does not seem to be myristoylated.</text>
</comment>
<comment type="miscellaneous">
    <text evidence="50">The need for an intact eIF4G factor for the initiation of translation of HAV results in an inability to shut off host protein synthesis by a mechanism similar to that of other picornaviruses.</text>
</comment>
<comment type="miscellaneous">
    <text evidence="23 30 31 48 50">During infection, enveloped virions (eHAV) are released from cells (PubMed:23542590). These eHAV are cloaked in host-derived membranes and resemble exosomes (PubMed:28490497). The membrane of eHAV is devoid of viral proteins and thus prevents their neutralization by antibodies (PubMed:23542590). eHAV budding is dependent on ESCRT-associated proteins VPS4B and PDCD6IP/ALIX (PubMed:23542590). eHAV are produced and released in the serum and plasma, but not in bile and feces which only contain the naked, nonenveloped virions (Probable). It is likely that eHAV also use HAVCR1 as a functional receptor to infect cells, an evolutionary trait that may enhance HAV infectivity (PubMed:29437974).</text>
</comment>
<comment type="miscellaneous">
    <text evidence="50">Wild-type HM175 (HM175/wt) comes from a sample isolated from a patient in Australia in 1976 and subsequently passaged three times in marmosets. HM175/7 is an attenuated strain derived from HM175 by 32 passages in African green monkey kidney cells. HM175/18f, HM175/24a, and HM175/43c are cytopathic isolates derived from HM175 by serial passages in FRhK-4 cells.</text>
</comment>
<comment type="miscellaneous">
    <text>Mutations in proteins 2B and 2C seem to be essential for strain HM175 adaptation to growth in cell culture.</text>
</comment>
<comment type="similarity">
    <text evidence="50">Belongs to the picornaviridae polyprotein family.</text>
</comment>
<comment type="caution">
    <text evidence="14">It is uncertain whether Met-1 or Met-3 is the initiator. In vitro, both are used, with a preference for Met-3.</text>
</comment>
<comment type="sequence caution" evidence="50">
    <conflict type="erroneous initiation">
        <sequence resource="EMBL-CDS" id="AAA45466"/>
    </conflict>
</comment>
<proteinExistence type="evidence at protein level"/>
<dbReference type="EC" id="3.6.1.15"/>
<dbReference type="EC" id="3.4.22.28" evidence="19"/>
<dbReference type="EC" id="2.7.7.48" evidence="35"/>
<dbReference type="EMBL" id="M14707">
    <property type="protein sequence ID" value="AAA45465.1"/>
    <property type="molecule type" value="Genomic_RNA"/>
</dbReference>
<dbReference type="EMBL" id="M14707">
    <property type="protein sequence ID" value="AAA45466.1"/>
    <property type="status" value="ALT_INIT"/>
    <property type="molecule type" value="Genomic_RNA"/>
</dbReference>
<dbReference type="EMBL" id="M16632">
    <property type="protein sequence ID" value="AAA45471.1"/>
    <property type="molecule type" value="Genomic_RNA"/>
</dbReference>
<dbReference type="EMBL" id="M59808">
    <property type="protein sequence ID" value="AAA45467.1"/>
    <property type="molecule type" value="Genomic_RNA"/>
</dbReference>
<dbReference type="EMBL" id="M59809">
    <property type="protein sequence ID" value="AAA45469.1"/>
    <property type="molecule type" value="Genomic_RNA"/>
</dbReference>
<dbReference type="EMBL" id="M59810">
    <property type="protein sequence ID" value="AAA45468.1"/>
    <property type="molecule type" value="Genomic_RNA"/>
</dbReference>
<dbReference type="EMBL" id="AH002352">
    <property type="protein sequence ID" value="AAA45475.1"/>
    <property type="molecule type" value="Genomic_RNA"/>
</dbReference>
<dbReference type="EMBL" id="AH002352">
    <property type="protein sequence ID" value="AAA45476.1"/>
    <property type="molecule type" value="Genomic_RNA"/>
</dbReference>
<dbReference type="EMBL" id="K00386">
    <property type="status" value="NOT_ANNOTATED_CDS"/>
    <property type="molecule type" value="Genomic_RNA"/>
</dbReference>
<dbReference type="EMBL" id="AF396398">
    <property type="protein sequence ID" value="AAL66215.1"/>
    <property type="molecule type" value="Genomic_RNA"/>
</dbReference>
<dbReference type="PIR" id="A03905">
    <property type="entry name" value="A03905"/>
</dbReference>
<dbReference type="PIR" id="A25981">
    <property type="entry name" value="GNNYHM"/>
</dbReference>
<dbReference type="PIR" id="A94149">
    <property type="entry name" value="GNNYMK"/>
</dbReference>
<dbReference type="PIR" id="JH0135">
    <property type="entry name" value="JH0135"/>
</dbReference>
<dbReference type="PIR" id="PQ0427">
    <property type="entry name" value="PQ0427"/>
</dbReference>
<dbReference type="PIR" id="PQ0428">
    <property type="entry name" value="PQ0428"/>
</dbReference>
<dbReference type="PIR" id="PQ0431">
    <property type="entry name" value="PQ0431"/>
</dbReference>
<dbReference type="RefSeq" id="NP_041007.1">
    <property type="nucleotide sequence ID" value="NC_001489.1"/>
</dbReference>
<dbReference type="RefSeq" id="NP_041008.1">
    <property type="nucleotide sequence ID" value="NC_001489.1"/>
</dbReference>
<dbReference type="PDB" id="1HAV">
    <property type="method" value="X-ray"/>
    <property type="resolution" value="2.00 A"/>
    <property type="chains" value="A/B=1520-1736"/>
</dbReference>
<dbReference type="PDB" id="1QA7">
    <property type="method" value="X-ray"/>
    <property type="resolution" value="1.90 A"/>
    <property type="chains" value="A/B/C/D=1520-1736"/>
</dbReference>
<dbReference type="PDB" id="2H6M">
    <property type="method" value="X-ray"/>
    <property type="resolution" value="1.40 A"/>
    <property type="chains" value="A=1520-1731"/>
</dbReference>
<dbReference type="PDB" id="2H9H">
    <property type="method" value="X-ray"/>
    <property type="resolution" value="1.39 A"/>
    <property type="chains" value="A=1520-1731"/>
</dbReference>
<dbReference type="PDB" id="2HAL">
    <property type="method" value="X-ray"/>
    <property type="resolution" value="1.35 A"/>
    <property type="chains" value="A=1520-1731"/>
</dbReference>
<dbReference type="PDB" id="4QPG">
    <property type="method" value="X-ray"/>
    <property type="resolution" value="3.50 A"/>
    <property type="chains" value="B=41-244, C=246-491"/>
</dbReference>
<dbReference type="PDB" id="4QPI">
    <property type="method" value="X-ray"/>
    <property type="resolution" value="3.01 A"/>
    <property type="chains" value="B=24-245, C=246-491"/>
</dbReference>
<dbReference type="PDB" id="4WZN">
    <property type="method" value="X-ray"/>
    <property type="resolution" value="2.70 A"/>
    <property type="chains" value="A/B=765-981"/>
</dbReference>
<dbReference type="PDB" id="5WTE">
    <property type="method" value="EM"/>
    <property type="resolution" value="3.40 A"/>
    <property type="chains" value="A=492-769, B=24-245, C=246-491"/>
</dbReference>
<dbReference type="PDB" id="5WTF">
    <property type="method" value="EM"/>
    <property type="resolution" value="3.90 A"/>
    <property type="chains" value="A=540-763, B=42-244, C=246-491"/>
</dbReference>
<dbReference type="PDB" id="5WTH">
    <property type="method" value="EM"/>
    <property type="resolution" value="4.20 A"/>
    <property type="chains" value="A=492-769, B=24-245, C=246-491"/>
</dbReference>
<dbReference type="PDB" id="7XT3">
    <property type="method" value="X-ray"/>
    <property type="resolution" value="2.15 A"/>
    <property type="chains" value="A=1215-1422"/>
</dbReference>
<dbReference type="PDBsum" id="1HAV"/>
<dbReference type="PDBsum" id="1QA7"/>
<dbReference type="PDBsum" id="2H6M"/>
<dbReference type="PDBsum" id="2H9H"/>
<dbReference type="PDBsum" id="2HAL"/>
<dbReference type="PDBsum" id="4QPG"/>
<dbReference type="PDBsum" id="4QPI"/>
<dbReference type="PDBsum" id="4WZN"/>
<dbReference type="PDBsum" id="5WTE"/>
<dbReference type="PDBsum" id="5WTF"/>
<dbReference type="PDBsum" id="5WTH"/>
<dbReference type="PDBsum" id="7XT3"/>
<dbReference type="BMRB" id="P08617"/>
<dbReference type="EMDB" id="EMD-6686"/>
<dbReference type="EMDB" id="EMD-6687"/>
<dbReference type="EMDB" id="EMD-6688"/>
<dbReference type="SMR" id="P08617"/>
<dbReference type="DrugBank" id="DB04634">
    <property type="generic name" value="N-BENZYLOXYCARBONYL-L-SERINE-BETALACTONE"/>
</dbReference>
<dbReference type="DrugBank" id="DB04029">
    <property type="generic name" value="Phenylalanylamide"/>
</dbReference>
<dbReference type="MEROPS" id="C03.005"/>
<dbReference type="ABCD" id="P08617">
    <property type="antibodies" value="2 sequenced antibodies"/>
</dbReference>
<dbReference type="GeneID" id="1493918"/>
<dbReference type="GeneID" id="1493919"/>
<dbReference type="KEGG" id="vg:1493918"/>
<dbReference type="KEGG" id="vg:1493919"/>
<dbReference type="SABIO-RK" id="P08617"/>
<dbReference type="EvolutionaryTrace" id="P08617"/>
<dbReference type="Proteomes" id="UP000006724">
    <property type="component" value="Segment"/>
</dbReference>
<dbReference type="Proteomes" id="UP000096966">
    <property type="component" value="Genome"/>
</dbReference>
<dbReference type="Proteomes" id="UP000139151">
    <property type="component" value="Genome"/>
</dbReference>
<dbReference type="Proteomes" id="UP000155985">
    <property type="component" value="Genome"/>
</dbReference>
<dbReference type="Proteomes" id="UP000157977">
    <property type="component" value="Genome"/>
</dbReference>
<dbReference type="GO" id="GO:0044162">
    <property type="term" value="C:host cell cytoplasmic vesicle membrane"/>
    <property type="evidence" value="ECO:0007669"/>
    <property type="project" value="UniProtKB-SubCell"/>
</dbReference>
<dbReference type="GO" id="GO:0044193">
    <property type="term" value="C:host cell mitochondrial outer membrane"/>
    <property type="evidence" value="ECO:0007669"/>
    <property type="project" value="UniProtKB-SubCell"/>
</dbReference>
<dbReference type="GO" id="GO:0072494">
    <property type="term" value="C:host multivesicular body"/>
    <property type="evidence" value="ECO:0007669"/>
    <property type="project" value="UniProtKB-SubCell"/>
</dbReference>
<dbReference type="GO" id="GO:0016020">
    <property type="term" value="C:membrane"/>
    <property type="evidence" value="ECO:0007669"/>
    <property type="project" value="UniProtKB-KW"/>
</dbReference>
<dbReference type="GO" id="GO:0039618">
    <property type="term" value="C:T=pseudo3 icosahedral viral capsid"/>
    <property type="evidence" value="ECO:0007669"/>
    <property type="project" value="UniProtKB-KW"/>
</dbReference>
<dbReference type="GO" id="GO:0005524">
    <property type="term" value="F:ATP binding"/>
    <property type="evidence" value="ECO:0007669"/>
    <property type="project" value="UniProtKB-KW"/>
</dbReference>
<dbReference type="GO" id="GO:0015267">
    <property type="term" value="F:channel activity"/>
    <property type="evidence" value="ECO:0007669"/>
    <property type="project" value="UniProtKB-KW"/>
</dbReference>
<dbReference type="GO" id="GO:0004197">
    <property type="term" value="F:cysteine-type endopeptidase activity"/>
    <property type="evidence" value="ECO:0007669"/>
    <property type="project" value="UniProtKB-EC"/>
</dbReference>
<dbReference type="GO" id="GO:0017111">
    <property type="term" value="F:ribonucleoside triphosphate phosphatase activity"/>
    <property type="evidence" value="ECO:0007669"/>
    <property type="project" value="UniProtKB-EC"/>
</dbReference>
<dbReference type="GO" id="GO:0003723">
    <property type="term" value="F:RNA binding"/>
    <property type="evidence" value="ECO:0007669"/>
    <property type="project" value="UniProtKB-KW"/>
</dbReference>
<dbReference type="GO" id="GO:0003724">
    <property type="term" value="F:RNA helicase activity"/>
    <property type="evidence" value="ECO:0007669"/>
    <property type="project" value="InterPro"/>
</dbReference>
<dbReference type="GO" id="GO:0003968">
    <property type="term" value="F:RNA-directed RNA polymerase activity"/>
    <property type="evidence" value="ECO:0007669"/>
    <property type="project" value="UniProtKB-KW"/>
</dbReference>
<dbReference type="GO" id="GO:0005198">
    <property type="term" value="F:structural molecule activity"/>
    <property type="evidence" value="ECO:0007669"/>
    <property type="project" value="InterPro"/>
</dbReference>
<dbReference type="GO" id="GO:0006351">
    <property type="term" value="P:DNA-templated transcription"/>
    <property type="evidence" value="ECO:0007669"/>
    <property type="project" value="InterPro"/>
</dbReference>
<dbReference type="GO" id="GO:0034220">
    <property type="term" value="P:monoatomic ion transmembrane transport"/>
    <property type="evidence" value="ECO:0007669"/>
    <property type="project" value="UniProtKB-KW"/>
</dbReference>
<dbReference type="GO" id="GO:0006508">
    <property type="term" value="P:proteolysis"/>
    <property type="evidence" value="ECO:0007669"/>
    <property type="project" value="UniProtKB-KW"/>
</dbReference>
<dbReference type="GO" id="GO:0046718">
    <property type="term" value="P:symbiont entry into host cell"/>
    <property type="evidence" value="ECO:0007669"/>
    <property type="project" value="UniProtKB-KW"/>
</dbReference>
<dbReference type="GO" id="GO:0039545">
    <property type="term" value="P:symbiont-mediated suppression of host cytoplasmic pattern recognition receptor signaling pathway via inhibition of MAVS activity"/>
    <property type="evidence" value="ECO:0007669"/>
    <property type="project" value="UniProtKB-KW"/>
</dbReference>
<dbReference type="GO" id="GO:0039694">
    <property type="term" value="P:viral RNA genome replication"/>
    <property type="evidence" value="ECO:0007669"/>
    <property type="project" value="InterPro"/>
</dbReference>
<dbReference type="GO" id="GO:0019062">
    <property type="term" value="P:virion attachment to host cell"/>
    <property type="evidence" value="ECO:0007669"/>
    <property type="project" value="UniProtKB-KW"/>
</dbReference>
<dbReference type="CDD" id="cd23215">
    <property type="entry name" value="Hepatovirus_RdRp"/>
    <property type="match status" value="1"/>
</dbReference>
<dbReference type="CDD" id="cd00205">
    <property type="entry name" value="rhv_like"/>
    <property type="match status" value="2"/>
</dbReference>
<dbReference type="FunFam" id="1.20.960.20:FF:000003">
    <property type="entry name" value="Genome polyprotein"/>
    <property type="match status" value="1"/>
</dbReference>
<dbReference type="FunFam" id="2.60.120.20:FF:000016">
    <property type="entry name" value="Genome polyprotein"/>
    <property type="match status" value="1"/>
</dbReference>
<dbReference type="FunFam" id="2.60.120.20:FF:000017">
    <property type="entry name" value="Genome polyprotein"/>
    <property type="match status" value="1"/>
</dbReference>
<dbReference type="FunFam" id="3.30.70.270:FF:000111">
    <property type="entry name" value="Genome polyprotein"/>
    <property type="match status" value="1"/>
</dbReference>
<dbReference type="Gene3D" id="1.20.960.20">
    <property type="match status" value="1"/>
</dbReference>
<dbReference type="Gene3D" id="2.60.120.20">
    <property type="match status" value="3"/>
</dbReference>
<dbReference type="Gene3D" id="3.30.70.270">
    <property type="match status" value="1"/>
</dbReference>
<dbReference type="Gene3D" id="2.40.10.10">
    <property type="entry name" value="Trypsin-like serine proteases"/>
    <property type="match status" value="2"/>
</dbReference>
<dbReference type="InterPro" id="IPR049133">
    <property type="entry name" value="2B_soluble"/>
</dbReference>
<dbReference type="InterPro" id="IPR043502">
    <property type="entry name" value="DNA/RNA_pol_sf"/>
</dbReference>
<dbReference type="InterPro" id="IPR004004">
    <property type="entry name" value="Helic/Pol/Pept_Calicivir-typ"/>
</dbReference>
<dbReference type="InterPro" id="IPR000605">
    <property type="entry name" value="Helicase_SF3_ssDNA/RNA_vir"/>
</dbReference>
<dbReference type="InterPro" id="IPR014759">
    <property type="entry name" value="Helicase_SF3_ssRNA_vir"/>
</dbReference>
<dbReference type="InterPro" id="IPR024354">
    <property type="entry name" value="Hepatitis_A_VP1-2A"/>
</dbReference>
<dbReference type="InterPro" id="IPR044067">
    <property type="entry name" value="PCV_3C_PRO"/>
</dbReference>
<dbReference type="InterPro" id="IPR000199">
    <property type="entry name" value="Peptidase_C3A/C3B_picornavir"/>
</dbReference>
<dbReference type="InterPro" id="IPR009003">
    <property type="entry name" value="Peptidase_S1_PA"/>
</dbReference>
<dbReference type="InterPro" id="IPR043504">
    <property type="entry name" value="Peptidase_S1_PA_chymotrypsin"/>
</dbReference>
<dbReference type="InterPro" id="IPR001676">
    <property type="entry name" value="Picornavirus_capsid"/>
</dbReference>
<dbReference type="InterPro" id="IPR043128">
    <property type="entry name" value="Rev_trsase/Diguanyl_cyclase"/>
</dbReference>
<dbReference type="InterPro" id="IPR033703">
    <property type="entry name" value="Rhv-like"/>
</dbReference>
<dbReference type="InterPro" id="IPR001205">
    <property type="entry name" value="RNA-dir_pol_C"/>
</dbReference>
<dbReference type="InterPro" id="IPR007094">
    <property type="entry name" value="RNA-dir_pol_PSvirus"/>
</dbReference>
<dbReference type="InterPro" id="IPR029053">
    <property type="entry name" value="Viral_coat"/>
</dbReference>
<dbReference type="Pfam" id="PF20758">
    <property type="entry name" value="2B_soluble"/>
    <property type="match status" value="1"/>
</dbReference>
<dbReference type="Pfam" id="PF12944">
    <property type="entry name" value="HAV_VP"/>
    <property type="match status" value="1"/>
</dbReference>
<dbReference type="Pfam" id="PF00548">
    <property type="entry name" value="Peptidase_C3"/>
    <property type="match status" value="1"/>
</dbReference>
<dbReference type="Pfam" id="PF00680">
    <property type="entry name" value="RdRP_1"/>
    <property type="match status" value="1"/>
</dbReference>
<dbReference type="Pfam" id="PF00073">
    <property type="entry name" value="Rhv"/>
    <property type="match status" value="2"/>
</dbReference>
<dbReference type="Pfam" id="PF00910">
    <property type="entry name" value="RNA_helicase"/>
    <property type="match status" value="1"/>
</dbReference>
<dbReference type="PRINTS" id="PR00918">
    <property type="entry name" value="CALICVIRUSNS"/>
</dbReference>
<dbReference type="SUPFAM" id="SSF56672">
    <property type="entry name" value="DNA/RNA polymerases"/>
    <property type="match status" value="1"/>
</dbReference>
<dbReference type="SUPFAM" id="SSF88633">
    <property type="entry name" value="Positive stranded ssRNA viruses"/>
    <property type="match status" value="3"/>
</dbReference>
<dbReference type="SUPFAM" id="SSF50494">
    <property type="entry name" value="Trypsin-like serine proteases"/>
    <property type="match status" value="1"/>
</dbReference>
<dbReference type="PROSITE" id="PS51874">
    <property type="entry name" value="PCV_3C_PRO"/>
    <property type="match status" value="1"/>
</dbReference>
<dbReference type="PROSITE" id="PS50507">
    <property type="entry name" value="RDRP_SSRNA_POS"/>
    <property type="match status" value="1"/>
</dbReference>
<dbReference type="PROSITE" id="PS51218">
    <property type="entry name" value="SF3_HELICASE_2"/>
    <property type="match status" value="1"/>
</dbReference>
<keyword id="KW-0002">3D-structure</keyword>
<keyword id="KW-0067">ATP-binding</keyword>
<keyword id="KW-0167">Capsid protein</keyword>
<keyword id="KW-0191">Covalent protein-RNA linkage</keyword>
<keyword id="KW-0903">Direct protein sequencing</keyword>
<keyword id="KW-1015">Disulfide bond</keyword>
<keyword id="KW-0347">Helicase</keyword>
<keyword id="KW-1035">Host cytoplasm</keyword>
<keyword id="KW-1036">Host cytoplasmic vesicle</keyword>
<keyword id="KW-1039">Host endosome</keyword>
<keyword id="KW-1043">Host membrane</keyword>
<keyword id="KW-1045">Host mitochondrion</keyword>
<keyword id="KW-1047">Host mitochondrion outer membrane</keyword>
<keyword id="KW-0945">Host-virus interaction</keyword>
<keyword id="KW-0378">Hydrolase</keyword>
<keyword id="KW-1090">Inhibition of host innate immune response by virus</keyword>
<keyword id="KW-1097">Inhibition of host MAVS by virus</keyword>
<keyword id="KW-1113">Inhibition of host RLR pathway by virus</keyword>
<keyword id="KW-0922">Interferon antiviral system evasion</keyword>
<keyword id="KW-0407">Ion channel</keyword>
<keyword id="KW-0406">Ion transport</keyword>
<keyword id="KW-0472">Membrane</keyword>
<keyword id="KW-0547">Nucleotide-binding</keyword>
<keyword id="KW-0548">Nucleotidyltransferase</keyword>
<keyword id="KW-0597">Phosphoprotein</keyword>
<keyword id="KW-0645">Protease</keyword>
<keyword id="KW-1185">Reference proteome</keyword>
<keyword id="KW-0694">RNA-binding</keyword>
<keyword id="KW-0696">RNA-directed RNA polymerase</keyword>
<keyword id="KW-1143">T=pseudo3 icosahedral capsid protein</keyword>
<keyword id="KW-0788">Thiol protease</keyword>
<keyword id="KW-0808">Transferase</keyword>
<keyword id="KW-0812">Transmembrane</keyword>
<keyword id="KW-1133">Transmembrane helix</keyword>
<keyword id="KW-0813">Transport</keyword>
<keyword id="KW-1161">Viral attachment to host cell</keyword>
<keyword id="KW-0899">Viral immunoevasion</keyword>
<keyword id="KW-1182">Viral ion channel</keyword>
<keyword id="KW-0693">Viral RNA replication</keyword>
<keyword id="KW-0946">Virion</keyword>
<keyword id="KW-1160">Virus entry into host cell</keyword>
<reference key="1">
    <citation type="journal article" date="1987" name="J. Virol.">
        <title>Complete nucleotide sequence of wild-type hepatitis A virus: comparison with different strains of hepatitis A virus and other picornaviruses.</title>
        <authorList>
            <person name="Cohen J.I."/>
            <person name="Ticehurst J.R."/>
            <person name="Purcell R.H."/>
            <person name="Buckler-White A."/>
            <person name="Baroudy B.M."/>
        </authorList>
    </citation>
    <scope>NUCLEOTIDE SEQUENCE [GENOMIC RNA]</scope>
    <source>
        <strain>HM175/wt</strain>
    </source>
</reference>
<reference key="2">
    <citation type="journal article" date="1987" name="Proc. Natl. Acad. Sci. U.S.A.">
        <title>Complete nucleotide sequence of an attenuated hepatitis A virus: comparison with wild-type virus.</title>
        <authorList>
            <person name="Cohen J.I."/>
            <person name="Rosenblum B."/>
            <person name="Ticehurst J.R."/>
            <person name="Daemer R.J."/>
            <person name="Feinstone S.M."/>
            <person name="Purcell R.H."/>
        </authorList>
    </citation>
    <scope>NUCLEOTIDE SEQUENCE [GENOMIC RNA]</scope>
    <source>
        <strain>HM175/7 MK-5</strain>
    </source>
</reference>
<reference key="3">
    <citation type="journal article" date="1991" name="J. Virol.">
        <title>Antigenic and genetic variation in cytopathic hepatitis A virus variants arising during persistent infection: evidence for genetic recombination.</title>
        <authorList>
            <person name="Lemon S.M."/>
            <person name="Murphy P.C."/>
            <person name="Shields P.A."/>
            <person name="Ping L.H."/>
            <person name="Feinstone S.M."/>
            <person name="Cromeans T."/>
            <person name="Jansen R.W."/>
        </authorList>
    </citation>
    <scope>NUCLEOTIDE SEQUENCE [GENOMIC RNA]</scope>
    <source>
        <strain>HM175/18f</strain>
        <strain>HM175/24a</strain>
        <strain>HM175/43c</strain>
    </source>
</reference>
<reference key="4">
    <citation type="journal article" date="1985" name="Proc. Natl. Acad. Sci. U.S.A.">
        <title>Sequence analysis of hepatitis A virus cDNA coding for capsid proteins and RNA polymerase.</title>
        <authorList>
            <person name="Baroudy B.M."/>
            <person name="Ticehurst J.R."/>
            <person name="Miele T.A."/>
            <person name="Maizel J.V. Jr."/>
            <person name="Purcell R.H."/>
            <person name="Feinstone S.M."/>
        </authorList>
    </citation>
    <scope>NUCLEOTIDE SEQUENCE [GENOMIC RNA] OF 1-854 AND 1724-2227</scope>
</reference>
<reference key="5">
    <citation type="journal article" date="1995" name="Virology">
        <title>Identification and site-directed mutagenesis of the primary (2A/2B) cleavage site of the hepatitis A virus polyprotein: functional impact on the infectivity of HAV RNA transcripts.</title>
        <authorList>
            <person name="Martin A."/>
            <person name="Escriou N."/>
            <person name="Chao S.-F."/>
            <person name="Girard M."/>
            <person name="Lemon S.M."/>
            <person name="Wychowski C."/>
        </authorList>
    </citation>
    <scope>PROTEIN SEQUENCE OF 837-856</scope>
    <scope>MUTAGENESIS OF GLN-836</scope>
    <scope>PROTEOLYTIC CLEAVAGE (GENOME POLYPROTEIN)</scope>
    <source>
        <strain>HM175p35</strain>
    </source>
</reference>
<reference key="6">
    <citation type="journal article" date="1983" name="Proc. Natl. Acad. Sci. U.S.A.">
        <title>Molecular cloning and characterization of hepatitis A virus cDNA.</title>
        <authorList>
            <person name="Ticehurst J.R."/>
            <person name="Racaniello V.R."/>
            <person name="Baroudy B.M."/>
            <person name="Baltimore D."/>
            <person name="Purcell R.H."/>
            <person name="Feinstone S.M."/>
        </authorList>
    </citation>
    <scope>NUCLEOTIDE SEQUENCE [GENOMIC RNA] OF 2090-2227</scope>
</reference>
<reference key="7">
    <citation type="journal article" date="2002" name="J. Clin. Microbiol.">
        <title>Molecular characterization of hepatitis a virus isolates from a transcontinental shellfish-borne outbreak.</title>
        <authorList>
            <person name="Sanchez G."/>
            <person name="Pinto R.M."/>
            <person name="Vanaclocha H."/>
            <person name="Bosch A."/>
        </authorList>
    </citation>
    <scope>NUCLEOTIDE SEQUENCE [GENOMIC RNA] OF 1-819</scope>
    <source>
        <strain>Isolate Val8</strain>
    </source>
</reference>
<reference key="8">
    <citation type="journal article" date="1986" name="J. Virol.">
        <title>Detection of a genome-linked protein (VPg) of hepatitis A virus and its comparison with other picornaviral VPgs.</title>
        <authorList>
            <person name="Weitz M."/>
            <person name="Baroudy B.M."/>
            <person name="Maloy W.L."/>
            <person name="Ticehurst J.R."/>
            <person name="Purcell R.H."/>
        </authorList>
    </citation>
    <scope>IDENTIFICATION (VIRAL PROTEIN GENOME-LINKED)</scope>
</reference>
<reference key="9">
    <citation type="journal article" date="1991" name="J. Virol.">
        <title>Proteolytic activity of hepatitis A virus 3C protein.</title>
        <authorList>
            <person name="Jia X.-Y."/>
            <person name="Ehrenfeld E."/>
            <person name="Summers D.F."/>
        </authorList>
    </citation>
    <scope>PROTEOLYTIC CLEAVAGE (GENOME POLYPROTEIN)</scope>
    <scope>FUNCTION (PROTEASE 3C)</scope>
    <scope>CATALYTIC ACTIVITY (PROTEASE 3C)</scope>
</reference>
<reference key="10">
    <citation type="journal article" date="1992" name="Virology">
        <title>Hepatitis A virus polyprotein synthesis initiates from two alternative AUG codons.</title>
        <authorList>
            <person name="Tesar M."/>
            <person name="Harmon S.A."/>
            <person name="Summers D.F."/>
            <person name="Ehrenfeld E."/>
        </authorList>
    </citation>
    <scope>IDENTIFICATION OF N-TERMINUS (GENOME POLYPROTEIN)</scope>
    <source>
        <strain>HM175/7</strain>
    </source>
</reference>
<reference key="11">
    <citation type="journal article" date="1993" name="Virology">
        <title>Analysis of a potential myristoylation site in hepatitis A virus capsid protein VP4.</title>
        <authorList>
            <person name="Tesar M."/>
            <person name="Jia X.-Y."/>
            <person name="Summers D.F."/>
            <person name="Ehrenfeld E."/>
        </authorList>
    </citation>
    <scope>ABSENCE OF MYRISTOYLATION (PROTEIN VP4)</scope>
    <source>
        <strain>HM175/7</strain>
    </source>
</reference>
<reference key="12">
    <citation type="journal article" date="1993" name="Virology">
        <title>Primary cleavage of the HAV capsid protein precursor in the middle of the proposed 2A coding region.</title>
        <authorList>
            <person name="Jia X.-Y."/>
            <person name="Summers D.F."/>
            <person name="Ehrenfeld E."/>
        </authorList>
    </citation>
    <scope>PROTEOLYTIC CLEAVAGE (GENOME POLYPROTEIN)</scope>
</reference>
<reference key="13">
    <citation type="journal article" date="1994" name="Virology">
        <title>Expression of hepatitis A virus precursor protein P3 in vivo and in vitro: polyprotein processing of the 3CD cleavage site.</title>
        <authorList>
            <person name="Tesar M."/>
            <person name="Pak I."/>
            <person name="Jia X.-Y."/>
            <person name="Richards O.C."/>
            <person name="Summers D.F."/>
            <person name="Ehrenfeld E."/>
        </authorList>
    </citation>
    <scope>PROTEOLYTIC CLEAVAGE (CAPSID PROTEIN VP0)</scope>
    <scope>CATALYTIC ACTIVITY (RNA-DIRECTED RNA POLYMERASE 3D-POL)</scope>
</reference>
<reference key="14">
    <citation type="journal article" date="1994" name="Virology">
        <title>Proteinase 3C of hepatitis A virus (HAV) cleaves the HAV polyprotein P2-P3 at all sites including VP1/2A and 2A/2B.</title>
        <authorList>
            <person name="Schultheiss T."/>
            <person name="Kusov Y.Y."/>
            <person name="Gauss-Mueller V."/>
        </authorList>
    </citation>
    <scope>PROTEOLYTIC CLEAVAGE (GENOME POLYPROTEIN)</scope>
</reference>
<reference key="15">
    <citation type="journal article" date="1995" name="J. Virol.">
        <title>Cleavage specificity of purified recombinant hepatitis A virus 3C proteinase on natural substrates.</title>
        <authorList>
            <person name="Schultheiss T."/>
            <person name="Sommergruber W."/>
            <person name="Kusov Y."/>
            <person name="Gauss-Mueller V."/>
        </authorList>
    </citation>
    <scope>PROTEOLYTIC CLEAVAGE (GENOME POLYPROTEIN)</scope>
</reference>
<reference key="16">
    <citation type="journal article" date="1995" name="FEBS Lett.">
        <title>Mutations in the hydrophobic domain of poliovirus protein 3AB abrogate its permeabilizing activity.</title>
        <authorList>
            <person name="Lama J."/>
            <person name="Carrasco L."/>
        </authorList>
    </citation>
    <scope>FUNCTION (PROTEIN 3AB)</scope>
</reference>
<reference key="17">
    <citation type="journal article" date="1997" name="J. Virol.">
        <title>Proteinase 3C-mediated processing of VP1-2A of two hepatitis A virus strains: in vivo evidence for cleavage at amino acid position 273/274 of VP1.</title>
        <authorList>
            <person name="Probst C."/>
            <person name="Jecht M."/>
            <person name="Gauss-Mueller V."/>
        </authorList>
    </citation>
    <scope>PROTEOLYTIC CLEAVAGE (CAPSID PROTEIN VP0)</scope>
</reference>
<reference key="18">
    <citation type="journal article" date="1997" name="Virology">
        <title>Induction of intracellular membrane rearrangements by HAV proteins 2C and 2BC.</title>
        <authorList>
            <person name="Teterina N.L."/>
            <person name="Bienz K."/>
            <person name="Egger D."/>
            <person name="Gorbalenya A.E."/>
            <person name="Ehrenfeld E."/>
        </authorList>
    </citation>
    <scope>FUNCTION (PROTEIN 2C)</scope>
    <scope>FUNCTION (PROTEIN 2BC)</scope>
    <scope>FUNCTION (PROTEIN 2B)</scope>
    <source>
        <strain>HM175/24a</strain>
        <strain>HM175/wt</strain>
        <strain>HM175p35</strain>
    </source>
</reference>
<reference key="19">
    <citation type="journal article" date="1998" name="Biochem. Biophys. Res. Commun.">
        <title>Polypeptide 3AB of hepatitis A virus is a transmembrane protein.</title>
        <authorList>
            <person name="Ciervo A."/>
            <person name="Beneduce F."/>
            <person name="Morace G."/>
        </authorList>
    </citation>
    <scope>SUBUNIT (PROTEIN 3AB)</scope>
    <scope>FUNCTION (PROTEIN 3AB)</scope>
    <scope>TOPOLOGY (PROTEIN 3AB)</scope>
    <scope>TOPOLOGY (PROTEIN 3A)</scope>
    <scope>FUNCTION (PROTEIN 3A)</scope>
</reference>
<reference key="20">
    <citation type="journal article" date="1998" name="Arch. Virol.">
        <title>Membrane association and RNA binding of recombinant hepatitis A virus protein 2C.</title>
        <authorList>
            <person name="Kusov Y.Y."/>
            <person name="Probst C."/>
            <person name="Jecht M."/>
            <person name="Jost P.D."/>
            <person name="Gauss-Mueller V."/>
        </authorList>
    </citation>
    <scope>SUBCELLULAR LOCATION (PROTEIN 2C)</scope>
    <scope>RNA-BINDING (PROTEIN 2C)</scope>
    <scope>FUNCTION (PROTEIN 2C)</scope>
</reference>
<reference key="21">
    <citation type="journal article" date="1998" name="J. Virol.">
        <title>Processing of proteinase precursors and their effect on hepatitis A virus particle formation.</title>
        <authorList>
            <person name="Probst C."/>
            <person name="Jecht M."/>
            <person name="Gauss-Mueller V."/>
        </authorList>
    </citation>
    <scope>PROTEOLYTIC CLEAVAGE (CAPSID PROTEIN VP0)</scope>
</reference>
<reference key="22">
    <citation type="journal article" date="1998" name="J. Virol.">
        <title>The human homolog of HAVcr-1 codes for a hepatitis A virus cellular receptor.</title>
        <authorList>
            <person name="Feigelstock D."/>
            <person name="Thompson P."/>
            <person name="Mattoo P."/>
            <person name="Zhang Y."/>
            <person name="Kaplan G.G."/>
        </authorList>
    </citation>
    <scope>FUNCTION (CAPSID PROTEIN VP1)</scope>
    <scope>FUNCTION (CAPSID PROTEIN VP2)</scope>
    <scope>FUNCTION (CAPSID PROTEIN VP3)</scope>
</reference>
<reference key="23">
    <citation type="journal article" date="1998" name="Virology">
        <title>Membrane permeability induced by hepatitis A virus proteins 2B and 2BC and proteolytic processing of HAV 2BC.</title>
        <authorList>
            <person name="Jecht M."/>
            <person name="Probst C."/>
            <person name="Gauss-Mueller V."/>
        </authorList>
    </citation>
    <scope>FUNCTION (PROTEIN 2B)</scope>
    <scope>FUNCTION (PROTEIN 2BC)</scope>
    <scope>SUBCELLULAR LOCATION (PROTEIN 2B)</scope>
    <scope>SUBCELLULAR LOCATION (PROTEIN 2C)</scope>
</reference>
<reference key="24">
    <citation type="journal article" date="1999" name="J. Virol.">
        <title>Improving proteolytic cleavage at the 3A/3B site of the hepatitis A virus polyprotein impairs processing and particle formation, and the impairment can be complemented in trans by 3AB and 3ABC.</title>
        <authorList>
            <person name="Kusov Y."/>
            <person name="Gauss-Mueller V."/>
        </authorList>
    </citation>
    <scope>PROTEOLYTIC CLEAVAGE (GENOME POLYPROTEIN)</scope>
    <scope>FUNCTION (PROTEIN 3ABC)</scope>
</reference>
<reference key="25">
    <citation type="journal article" date="1999" name="Virology">
        <title>Mapping of protein domains of hepatitis A virus 3AB essential for interaction with 3CD and viral RNA.</title>
        <authorList>
            <person name="Beneduce F."/>
            <person name="Ciervo A."/>
            <person name="Kusov Y.Y."/>
            <person name="Gauss-Mueller V."/>
            <person name="Morace G."/>
        </authorList>
    </citation>
    <scope>FUNCTION (PROTEIN 3AB)</scope>
    <scope>INTERACTION WITH PROTEIN 3CD (PROTEIN 3AB)</scope>
    <scope>INTERACTION WITH PROTEIN 3AB (PROTEIN 3CD)</scope>
    <scope>RNA-BINDING (PROTEIN 3AB)</scope>
    <scope>FUNCTION (PROTEIN 3A)</scope>
    <scope>FUNCTION (PROTEIN 3CD)</scope>
    <source>
        <strain>HM175/7</strain>
    </source>
</reference>
<reference key="26">
    <citation type="journal article" date="1999" name="J. Virol.">
        <title>Hepatitis A virus capsid protein VP1 has a heterogeneous C terminus.</title>
        <authorList>
            <person name="Graff J."/>
            <person name="Richards O.C."/>
            <person name="Swiderek K.M."/>
            <person name="Davis M.T."/>
            <person name="Rusnak F."/>
            <person name="Harmon S.A."/>
            <person name="Jia X.-Y."/>
            <person name="Summers D.F."/>
            <person name="Ehrenfeld E."/>
        </authorList>
    </citation>
    <scope>PROTEOLYTIC CLEAVAGE (GENOME POLYPROTEIN)</scope>
    <scope>PROTEOLYTIC CLEAVAGE (PROTEIN VP1-2A)</scope>
    <source>
        <strain>HM175p35</strain>
        <strain>HM175pE</strain>
    </source>
</reference>
<reference key="27">
    <citation type="journal article" date="1999" name="J. Biol. Chem.">
        <title>Intrinsic signals for the assembly of hepatitis A virus particles. Role of structural proteins VP4 and 2A.</title>
        <authorList>
            <person name="Probst C."/>
            <person name="Jecht M."/>
            <person name="Gauss-Mueller V."/>
        </authorList>
    </citation>
    <scope>FUNCTION (PROTEIN VP1-2A)</scope>
    <scope>FUNCTION (PROTEIN VP4)</scope>
</reference>
<reference key="28">
    <citation type="journal article" date="2001" name="J. Virol.">
        <title>Neutralization of hepatitis A virus (HAV) by an immunoadhesin containing the cysteine-rich region of HAV cellular receptor-1.</title>
        <authorList>
            <person name="Silberstein E."/>
            <person name="Dveksler G."/>
            <person name="Kaplan G.G."/>
        </authorList>
    </citation>
    <scope>FUNCTION (CAPSID PROTEIN VP1)</scope>
    <scope>FUNCTION (CAPSID PROTEIN VP2)</scope>
    <scope>FUNCTION (CAPSID PROTEIN VP3)</scope>
</reference>
<reference key="29">
    <citation type="journal article" date="2002" name="J. Virol.">
        <title>Analysis of deletion mutants indicates that the 2A polypeptide of hepatitis A virus participates in virion morphogenesis.</title>
        <authorList>
            <person name="Cohen L."/>
            <person name="Benichou D."/>
            <person name="Martin A."/>
        </authorList>
    </citation>
    <scope>FUNCTION (PROTEIN VP1-2A)</scope>
    <scope>DOMAIN (PROTEIN VP1-2A)</scope>
    <source>
        <strain>HM175/18f</strain>
    </source>
</reference>
<reference key="30">
    <citation type="journal article" date="2003" name="J. Biol. Chem.">
        <title>Homogenous hepatitis A virus particles. Proteolytic release of the assembly signal 2A from procapsids by factor Xa.</title>
        <authorList>
            <person name="Rachow A."/>
            <person name="Gauss-Mueller V."/>
            <person name="Probst C."/>
        </authorList>
    </citation>
    <scope>SUBUNIT (PROTEIN VP1-2A)</scope>
    <scope>MUTAGENESIS OF ARG-769</scope>
    <scope>DOMAIN (PROTEIN VP1-2A)</scope>
    <scope>PROTEOLYTIC CLEAVAGE (CAPSID PROTEIN VP0)</scope>
</reference>
<reference key="31">
    <citation type="journal article" date="2003" name="J. Med. Virol.">
        <title>Importance of amino acid 216 in nonstructural protein 2B for replication of hepatitis A virus in cell culture and in vivo.</title>
        <authorList>
            <person name="Graff J."/>
            <person name="Emerson S.U."/>
        </authorList>
    </citation>
    <scope>MUTAGENESIS OF ALA-1052</scope>
</reference>
<reference key="32">
    <citation type="journal article" date="2005" name="Biochem. J.">
        <title>Hepatitis A virus proteinase 3C binding to viral RNA: correlation with substrate binding and enzyme dimerization.</title>
        <authorList>
            <person name="Peters H."/>
            <person name="Kusov Y.Y."/>
            <person name="Meyer S."/>
            <person name="Benie A.J."/>
            <person name="Baeuml E."/>
            <person name="Wolff M."/>
            <person name="Rademacher C."/>
            <person name="Peters T."/>
            <person name="Gauss-Mueller V."/>
        </authorList>
    </citation>
    <scope>MUTAGENESIS OF CYS-1543 AND CYS-1691</scope>
    <scope>DISULFIDE BOND (PROTEASE 3C)</scope>
    <scope>SUBUNIT (PROTEASE 3C)</scope>
    <scope>RNA-BINDING (PROTEASE 3C)</scope>
</reference>
<reference key="33">
    <citation type="journal article" date="2007" name="Proc. Natl. Acad. Sci. U.S.A.">
        <title>Disruption of innate immunity due to mitochondrial targeting of a picornaviral protease precursor.</title>
        <authorList>
            <person name="Yang Y."/>
            <person name="Liang Y."/>
            <person name="Qu L."/>
            <person name="Chen Z."/>
            <person name="Yi M."/>
            <person name="Li K."/>
            <person name="Lemon S.M."/>
        </authorList>
    </citation>
    <scope>FUNCTION (PROTEIN 3ABC)</scope>
    <scope>SUBCELLULAR LOCATION (PROTEIN 3ABC)</scope>
    <scope>INTERACTION WITH HUMAN MAVS (PROTEIN 3ABC)</scope>
    <source>
        <strain>HM175/18f</strain>
    </source>
</reference>
<reference key="34">
    <citation type="journal article" date="2007" name="Nucleic Acids Res.">
        <title>Poly(A) binding protein, C-terminally truncated by the hepatitis A virus proteinase 3C, inhibits viral translation.</title>
        <authorList>
            <person name="Zhang B."/>
            <person name="Morace G."/>
            <person name="Gauss-Mueller V."/>
            <person name="Kusov Y."/>
        </authorList>
    </citation>
    <scope>FUNCTION (PROTEASE 3C)</scope>
</reference>
<reference key="35">
    <citation type="journal article" date="2008" name="J. Gen. Virol.">
        <title>Hepatitis A virus protein 2B suppresses beta interferon (IFN) gene transcription by interfering with IFN regulatory factor 3 activation.</title>
        <authorList>
            <person name="Paulmann D."/>
            <person name="Magulski T."/>
            <person name="Schwarz R."/>
            <person name="Heitmann L."/>
            <person name="Flehmig B."/>
            <person name="Vallbracht A."/>
            <person name="Dotzauer A."/>
        </authorList>
    </citation>
    <scope>FUNCTION (PROTEIN 2B)</scope>
</reference>
<reference key="36">
    <citation type="journal article" date="2008" name="BMB Rep.">
        <title>The unique role of domain 2A of the hepatitis A virus precursor polypeptide P1-2A in viral morphogenesis.</title>
        <authorList>
            <person name="Morace G."/>
            <person name="Kusov Y."/>
            <person name="Dzagurov G."/>
            <person name="Beneduce F."/>
            <person name="Gauss-Muller V."/>
        </authorList>
    </citation>
    <scope>PROTEOLYTIC CLEAVAGE (GENOME POLYPROTEIN)</scope>
    <scope>MUTAGENESIS OF ARG-769</scope>
    <scope>SUBUNIT (PROTEIN VP1-2A)</scope>
    <scope>PROTEOLYTIC CLEAVAGE (PROTEIN VP1-2A)</scope>
</reference>
<reference key="37">
    <citation type="journal article" date="2008" name="J. Virol.">
        <title>Functional analysis of picornavirus 2B proteins: effects on calcium homeostasis and intracellular protein trafficking.</title>
        <authorList>
            <person name="de Jong A.S."/>
            <person name="de Mattia F."/>
            <person name="Van Dommelen M.M."/>
            <person name="Lanke K."/>
            <person name="Melchers W.J."/>
            <person name="Willems P.H."/>
            <person name="van Kuppeveld F.J."/>
        </authorList>
    </citation>
    <scope>FUNCTION (PROTEIN 2B)</scope>
    <scope>SUBCELLULAR LOCATION (PROTEIN 2B)</scope>
</reference>
<reference key="38">
    <citation type="journal article" date="2011" name="PLoS Pathog.">
        <title>Disruption of TLR3 signaling due to cleavage of TRIF by the hepatitis A virus protease-polymerase processing intermediate, 3CD.</title>
        <authorList>
            <person name="Qu L."/>
            <person name="Feng Z."/>
            <person name="Yamane D."/>
            <person name="Liang Y."/>
            <person name="Lanford R.E."/>
            <person name="Li K."/>
            <person name="Lemon S.M."/>
        </authorList>
    </citation>
    <scope>FUNCTION (PROTEIN 3CD)</scope>
    <scope>MUTAGENESIS OF CYS-1691</scope>
    <source>
        <strain>HM175/18f</strain>
    </source>
</reference>
<reference key="39">
    <citation type="journal article" date="2013" name="Nature">
        <title>A pathogenic picornavirus acquires an envelope by hijacking cellular membranes.</title>
        <authorList>
            <person name="Feng Z."/>
            <person name="Hensley L."/>
            <person name="McKnight K.L."/>
            <person name="Hu F."/>
            <person name="Madden V."/>
            <person name="Ping L."/>
            <person name="Jeong S.H."/>
            <person name="Walker C."/>
            <person name="Lanford R.E."/>
            <person name="Lemon S.M."/>
        </authorList>
    </citation>
    <scope>DOMAIN LATE-BUDDING (GENOME POLYPROTEIN)</scope>
    <scope>DOMAIN LATE-BUDDING (CAPSID PROTEIN VP2)</scope>
    <scope>MUTAGENESIS OF TYR-167 AND TYR-200</scope>
</reference>
<reference key="40">
    <citation type="journal article" date="2013" name="MBio">
        <title>ACBD3 interaction with TBC1 domain 22 protein is differentially affected by enteroviral and kobuviral 3A protein binding.</title>
        <authorList>
            <person name="Greninger A.L."/>
            <person name="Knudsen G.M."/>
            <person name="Betegon M."/>
            <person name="Burlingame A.L."/>
            <person name="DeRisi J.L."/>
        </authorList>
    </citation>
    <scope>INTERACTION WITH HOST ACBD3</scope>
</reference>
<reference key="41">
    <citation type="journal article" date="2014" name="J. Virol.">
        <title>Hepatitis A virus 3C protease cleaves NEMO to impair induction of beta interferon.</title>
        <authorList>
            <person name="Wang D."/>
            <person name="Fang L."/>
            <person name="Wei D."/>
            <person name="Zhang H."/>
            <person name="Luo R."/>
            <person name="Chen H."/>
            <person name="Li K."/>
            <person name="Xiao S."/>
        </authorList>
    </citation>
    <scope>FUNCTION (PROTEASE 3C)</scope>
</reference>
<reference key="42">
    <citation type="journal article" date="2014" name="Curr. Opin. Virol.">
        <title>Formation and working mechanism of the picornavirus VPg uridylylation complex.</title>
        <authorList>
            <person name="Sun Y."/>
            <person name="Guo Y."/>
            <person name="Lou Z."/>
        </authorList>
    </citation>
    <scope>FUNCTION (VIRAL PROTEIN GENOME-LINKED)</scope>
</reference>
<reference key="43">
    <citation type="journal article" date="2015" name="Sci. Rep.">
        <title>The C-terminal region of the non-structural protein 2B from Hepatitis A Virus demonstrates lipid-specific viroporin-like activity.</title>
        <authorList>
            <person name="Shukla A."/>
            <person name="Dey D."/>
            <person name="Banerjee K."/>
            <person name="Nain A."/>
            <person name="Banerjee M."/>
        </authorList>
    </citation>
    <scope>FUNCTION (PROTEIN 2B)</scope>
    <scope>SUBUNIT (PROTEIN 2B)</scope>
    <scope>DOMAIN (PROTEIN 2B)</scope>
    <scope>SUBCELLULAR LOCATION (PROTEIN 2B)</scope>
</reference>
<reference key="44">
    <citation type="journal article" date="2016" name="Viruses">
        <title>Roles of the picornaviral 3C proteinase in the viral life cycle and host cells.</title>
        <authorList>
            <person name="Sun D."/>
            <person name="Chen S."/>
            <person name="Cheng A."/>
            <person name="Wang M."/>
        </authorList>
    </citation>
    <scope>REVIEW</scope>
</reference>
<reference key="45">
    <citation type="journal article" date="2017" name="Proc. Natl. Acad. Sci. U.S.A.">
        <title>Protein composition of the hepatitis A virus quasi-envelope.</title>
        <authorList>
            <person name="McKnight K.L."/>
            <person name="Xie L."/>
            <person name="Gonzalez-Lopez O."/>
            <person name="Rivera-Serrano E.E."/>
            <person name="Chen X."/>
            <person name="Lemon S.M."/>
        </authorList>
    </citation>
    <scope>PROTEOLYTIC CLEAVAGE (PROTEIN VP1-2A)</scope>
    <scope>SUBCELLULAR LOCATION (CAPSID PROTEIN VP1)</scope>
    <scope>SUBCELLULAR LOCATION (CAPSID PROTEIN VP2)</scope>
    <scope>SUBCELLULAR LOCATION (CAPSID PROTEIN VP3)</scope>
</reference>
<reference key="46">
    <citation type="journal article" date="2018" name="J. Virol.">
        <title>HAVCR1 (CD365) and its mouse ortholog are functional hepatitis A virus (HAV) cellular receptors that mediate HAV infection.</title>
        <authorList>
            <person name="Costafreda M.I."/>
            <person name="Kaplan G."/>
        </authorList>
    </citation>
    <scope>FUNCTION (CAPSID PROTEIN VP1)</scope>
    <scope>FUNCTION (CAPSID PROTEIN VP2)</scope>
    <scope>FUNCTION (CAPSID PROTEIN VP3)</scope>
</reference>
<reference key="47">
    <citation type="journal article" date="1994" name="Nature">
        <title>Picornaviral 3C cysteine proteinases have a fold similar to chymotrypsin-like serine proteinases.</title>
        <authorList>
            <person name="Allaire M."/>
            <person name="Chernaia M.M."/>
            <person name="Malcolm B.A."/>
            <person name="James M.N."/>
        </authorList>
    </citation>
    <scope>X-RAY CRYSTALLOGRAPHY (2.0 ANGSTROMS) OF 1520-1736</scope>
</reference>
<reference key="48">
    <citation type="journal article" date="1997" name="J. Virol.">
        <title>The refined crystal structure of the 3C gene product from hepatitis A virus: specific proteinase activity and RNA recognition.</title>
        <authorList>
            <person name="Bergmann E.M."/>
            <person name="Mosimann S.C."/>
            <person name="Chernaia M.M."/>
            <person name="Malcolm B.A."/>
            <person name="James M.N.G."/>
        </authorList>
    </citation>
    <scope>X-RAY CRYSTALLOGRAPHY (2.0 ANGSTROMS) OF 1520-1736</scope>
    <scope>RNA-BINDING (PROTEASE 3C)</scope>
    <scope>FUNCTION (PROTEASE 3C)</scope>
</reference>
<reference key="49">
    <citation type="journal article" date="1999" name="Virology">
        <title>Crystal structure of an inhibitor complex of the 3C proteinase from hepatitis A virus (HAV) and implications for the polyprotein processing in HAV.</title>
        <authorList>
            <person name="Bergmann E.M."/>
            <person name="Cherney M.M."/>
            <person name="Mckendrick J."/>
            <person name="Frormann S."/>
            <person name="Luo C."/>
            <person name="Malcolm B.A."/>
            <person name="Vederas J.C."/>
            <person name="James M.N.G."/>
        </authorList>
    </citation>
    <scope>X-RAY CRYSTALLOGRAPHY (1.9 ANGSTROMS) OF 1520-1736 IN COMPLEX WITH THE INHIBITOR IODOACETYL-VALYL-PHENYLALANYL-AMIDE</scope>
</reference>
<reference key="50">
    <citation type="journal article" date="2006" name="J. Mol. Biol.">
        <title>An episulfide cation (thiiranium ring) trapped in the active site of HAV 3C proteinase inactivated by peptide-based ketone inhibitors.</title>
        <authorList>
            <person name="Yin J."/>
            <person name="Cherney M.M."/>
            <person name="Bergmann E.M."/>
            <person name="Zhang J."/>
            <person name="Huitema C."/>
            <person name="Pettersson H."/>
            <person name="Eltis L.D."/>
            <person name="Vederas J.C."/>
            <person name="James M.N.G."/>
        </authorList>
    </citation>
    <scope>X-RAY CRYSTALLOGRAPHY (1.35 ANGSTROMS) OF 1520-1731 IN COMPLEX WITH PEPTIDE-BASED KETONE INHIBITORS</scope>
</reference>
<reference evidence="53" key="51">
    <citation type="journal article" date="2015" name="J. Virol.">
        <title>Structural basis for host membrane remodeling induced by protein 2B of hepatitis A virus.</title>
        <authorList>
            <person name="Vives-Adrian L."/>
            <person name="Garriga D."/>
            <person name="Buxaderas M."/>
            <person name="Fraga J."/>
            <person name="Pereira P.J."/>
            <person name="Macedo-Ribeiro S."/>
            <person name="Verdaguer N."/>
        </authorList>
    </citation>
    <scope>X-RAY CRYSTALLOGRAPHY (2.70 ANGSTROMS) OF 765-981</scope>
    <scope>SUBUNIT (PROTEIN 2B)</scope>
</reference>
<reference key="52">
    <citation type="journal article" date="2015" name="Nature">
        <title>Hepatitis A virus and the origins of picornaviruses.</title>
        <authorList>
            <person name="Wang X."/>
            <person name="Ren J."/>
            <person name="Gao Q."/>
            <person name="Hu Z."/>
            <person name="Sun Y."/>
            <person name="Li X."/>
            <person name="Rowlands D.J."/>
            <person name="Yin W."/>
            <person name="Wang J."/>
            <person name="Stuart D.I."/>
            <person name="Rao Z."/>
            <person name="Fry E.E."/>
        </authorList>
    </citation>
    <scope>X-RAY CRYSTALLOGRAPHY (3.01 ANGSTROMS) OF 24-245 AND 246-491</scope>
    <scope>FUNCTION (PROTEIN VP0)</scope>
    <scope>SUBCELLULAR LOCATION (PROTEIN VP4)</scope>
    <scope>INTERACTION WITH CAPSID PROTEIN VP2 (CAPSID PROTEIN VP1)</scope>
    <scope>INTERACTION WITH CAPSID PROTEIN VP2 (CAPSID PROTEIN VP3)</scope>
    <scope>INTERACTION WITH CAPSID PROTEIN VP1 (CAPSID PROTEIN VP2)</scope>
    <scope>INTERACTION WITH CAPSID PROTEIN VP1(CAPSID PROTEIN VP3)</scope>
    <scope>INTERACTION WITH CAPSID PROTEIN VP3 (CAPSID PROTEIN VP1)</scope>
    <scope>INTERACTION WITH CAPSID PROTEIN VP3 (CAPSID PROTEIN VP2)</scope>
    <scope>FUNCTION (CAPSID PROTEIN VP1)</scope>
    <scope>FUNCTION (CAPSID PROTEIN VP2)</scope>
    <scope>FUNCTION (CAPSID PROTEIN VP3)</scope>
    <scope>SUBCELLULAR LOCATION (CAPSID PROTEIN VP1)</scope>
    <scope>SUBCELLULAR LOCATION (CAPSID PROTEIN VP2)</scope>
    <scope>SUBCELLULAR LOCATION (CAPSID PROTEIN VP3)</scope>
    <source>
        <strain>TZ84</strain>
    </source>
</reference>
<reference evidence="54 55 56" key="53">
    <citation type="journal article" date="2017" name="Proc. Natl. Acad. Sci. U.S.A.">
        <title>Potent neutralization of hepatitis A virus reveals a receptor mimic mechanism and the receptor recognition site.</title>
        <authorList>
            <person name="Wang X."/>
            <person name="Zhu L."/>
            <person name="Dang M."/>
            <person name="Hu Z."/>
            <person name="Gao Q."/>
            <person name="Yuan S."/>
            <person name="Sun Y."/>
            <person name="Zhang B."/>
            <person name="Ren J."/>
            <person name="Kotecha A."/>
            <person name="Walter T.S."/>
            <person name="Wang J."/>
            <person name="Fry E.E."/>
            <person name="Stuart D.I."/>
            <person name="Rao Z."/>
        </authorList>
    </citation>
    <scope>STRUCTURE BY ELECTRON MICROSCOPY (3.40 ANGSTROMS) OF 492-769; 24-245 AND 246-491</scope>
    <scope>INTERACTION WITH CAPSID PROTEIN VP2 (CAPSID PROTEIN VP1)</scope>
    <scope>INTERACTION WITH CAPSID PROTEIN VP2 (CAPSID PROTEIN VP3)</scope>
    <scope>INTERACTION WITH CAPSID PROTEIN VP1 (CAPSID PROTEIN VP2)</scope>
    <scope>INTERACTION WITH CAPSID PROTEIN VP1(CAPSID PROTEIN VP3)</scope>
    <scope>INTERACTION WITH CAPSID PROTEIN VP3 (CAPSID PROTEIN VP1)</scope>
    <scope>INTERACTION WITH CAPSID PROTEIN VP3 (CAPSID PROTEIN VP2)</scope>
    <scope>FUNCTION (CAPSID PROTEIN VP1)</scope>
    <scope>FUNCTION (CAPSID PROTEIN VP2)</scope>
    <scope>FUNCTION (CAPSID PROTEIN VP3)</scope>
    <scope>SUBCELLULAR LOCATION (CAPSID PROTEIN VP1)</scope>
    <scope>SUBCELLULAR LOCATION (CAPSID PROTEIN VP2)</scope>
    <scope>SUBCELLULAR LOCATION (CAPSID PROTEIN VP3)</scope>
</reference>
<protein>
    <recommendedName>
        <fullName>Genome polyprotein</fullName>
    </recommendedName>
    <component>
        <recommendedName>
            <fullName>Capsid protein VP0</fullName>
        </recommendedName>
        <alternativeName>
            <fullName>VP4-VP2</fullName>
        </alternativeName>
    </component>
    <component>
        <recommendedName>
            <fullName>Capsid protein VP4</fullName>
        </recommendedName>
        <alternativeName>
            <fullName>P1A</fullName>
        </alternativeName>
        <alternativeName>
            <fullName>Virion protein 4</fullName>
        </alternativeName>
    </component>
    <component>
        <recommendedName>
            <fullName>Capsid protein VP2</fullName>
        </recommendedName>
        <alternativeName>
            <fullName>P1B</fullName>
        </alternativeName>
        <alternativeName>
            <fullName>Virion protein 2</fullName>
        </alternativeName>
    </component>
    <component>
        <recommendedName>
            <fullName>Capsid protein VP3</fullName>
        </recommendedName>
        <alternativeName>
            <fullName>P1C</fullName>
        </alternativeName>
        <alternativeName>
            <fullName>Virion protein 3</fullName>
        </alternativeName>
    </component>
    <component>
        <recommendedName>
            <fullName>Protein VP1-2A</fullName>
        </recommendedName>
        <alternativeName>
            <fullName>VP1-pX</fullName>
        </alternativeName>
    </component>
    <component>
        <recommendedName>
            <fullName>Capsid protein VP1</fullName>
        </recommendedName>
        <alternativeName>
            <fullName>P1D</fullName>
        </alternativeName>
        <alternativeName>
            <fullName>Virion protein 1</fullName>
        </alternativeName>
    </component>
    <component>
        <recommendedName>
            <fullName>Assembly signal 2A</fullName>
        </recommendedName>
        <alternativeName>
            <fullName evidence="48">pX</fullName>
        </alternativeName>
    </component>
    <component>
        <recommendedName>
            <fullName>Protein 2BC</fullName>
        </recommendedName>
    </component>
    <component>
        <recommendedName>
            <fullName>Protein 2B</fullName>
            <shortName>P2B</shortName>
        </recommendedName>
    </component>
    <component>
        <recommendedName>
            <fullName>Protein 2C</fullName>
            <shortName>P2C</shortName>
            <ecNumber>3.6.1.15</ecNumber>
        </recommendedName>
    </component>
    <component>
        <recommendedName>
            <fullName>Protein 3ABCD</fullName>
            <shortName>P3</shortName>
        </recommendedName>
    </component>
    <component>
        <recommendedName>
            <fullName>Protein 3ABC</fullName>
        </recommendedName>
    </component>
    <component>
        <recommendedName>
            <fullName>Protein 3AB</fullName>
        </recommendedName>
    </component>
    <component>
        <recommendedName>
            <fullName>Protein 3A</fullName>
            <shortName>P3A</shortName>
        </recommendedName>
    </component>
    <component>
        <recommendedName>
            <fullName>Viral protein genome-linked</fullName>
            <shortName>VPg</shortName>
        </recommendedName>
        <alternativeName>
            <fullName>Protein 3B</fullName>
            <shortName>P3B</shortName>
        </alternativeName>
    </component>
    <component>
        <recommendedName>
            <fullName>Protein 3CD</fullName>
        </recommendedName>
    </component>
    <component>
        <recommendedName>
            <fullName>Protease 3C</fullName>
            <shortName>P3C</shortName>
            <ecNumber evidence="19">3.4.22.28</ecNumber>
        </recommendedName>
        <alternativeName>
            <fullName>Picornain 3C</fullName>
        </alternativeName>
    </component>
    <component>
        <recommendedName>
            <fullName>RNA-directed RNA polymerase 3D-POL</fullName>
            <shortName>P3D-POL</shortName>
            <ecNumber evidence="35">2.7.7.48</ecNumber>
        </recommendedName>
    </component>
</protein>
<name>POLG_HAVHM</name>
<accession>P08617</accession>
<accession>P06443</accession>
<accession>P26580</accession>
<accession>P26581</accession>
<accession>P26582</accession>
<accession>Q81082</accession>
<accession>Q81094</accession>
<accession>Q8V405</accession>
<evidence type="ECO:0000250" key="1"/>
<evidence type="ECO:0000250" key="2">
    <source>
        <dbReference type="UniProtKB" id="P03300"/>
    </source>
</evidence>
<evidence type="ECO:0000255" key="3"/>
<evidence type="ECO:0000255" key="4">
    <source>
        <dbReference type="PROSITE-ProRule" id="PRU00539"/>
    </source>
</evidence>
<evidence type="ECO:0000255" key="5">
    <source>
        <dbReference type="PROSITE-ProRule" id="PRU00551"/>
    </source>
</evidence>
<evidence type="ECO:0000255" key="6">
    <source>
        <dbReference type="PROSITE-ProRule" id="PRU01222"/>
    </source>
</evidence>
<evidence type="ECO:0000269" key="7">
    <source>
    </source>
</evidence>
<evidence type="ECO:0000269" key="8">
    <source>
    </source>
</evidence>
<evidence type="ECO:0000269" key="9">
    <source>
    </source>
</evidence>
<evidence type="ECO:0000269" key="10">
    <source>
    </source>
</evidence>
<evidence type="ECO:0000269" key="11">
    <source>
    </source>
</evidence>
<evidence type="ECO:0000269" key="12">
    <source>
    </source>
</evidence>
<evidence type="ECO:0000269" key="13">
    <source>
    </source>
</evidence>
<evidence type="ECO:0000269" key="14">
    <source>
    </source>
</evidence>
<evidence type="ECO:0000269" key="15">
    <source>
    </source>
</evidence>
<evidence type="ECO:0000269" key="16">
    <source>
    </source>
</evidence>
<evidence type="ECO:0000269" key="17">
    <source>
    </source>
</evidence>
<evidence type="ECO:0000269" key="18">
    <source>
    </source>
</evidence>
<evidence type="ECO:0000269" key="19">
    <source>
    </source>
</evidence>
<evidence type="ECO:0000269" key="20">
    <source>
    </source>
</evidence>
<evidence type="ECO:0000269" key="21">
    <source>
    </source>
</evidence>
<evidence type="ECO:0000269" key="22">
    <source>
    </source>
</evidence>
<evidence type="ECO:0000269" key="23">
    <source>
    </source>
</evidence>
<evidence type="ECO:0000269" key="24">
    <source>
    </source>
</evidence>
<evidence type="ECO:0000269" key="25">
    <source>
    </source>
</evidence>
<evidence type="ECO:0000269" key="26">
    <source>
    </source>
</evidence>
<evidence type="ECO:0000269" key="27">
    <source>
    </source>
</evidence>
<evidence type="ECO:0000269" key="28">
    <source>
    </source>
</evidence>
<evidence type="ECO:0000269" key="29">
    <source>
    </source>
</evidence>
<evidence type="ECO:0000269" key="30">
    <source>
    </source>
</evidence>
<evidence type="ECO:0000269" key="31">
    <source>
    </source>
</evidence>
<evidence type="ECO:0000269" key="32">
    <source>
    </source>
</evidence>
<evidence type="ECO:0000269" key="33">
    <source>
    </source>
</evidence>
<evidence type="ECO:0000269" key="34">
    <source>
    </source>
</evidence>
<evidence type="ECO:0000269" key="35">
    <source>
    </source>
</evidence>
<evidence type="ECO:0000269" key="36">
    <source>
    </source>
</evidence>
<evidence type="ECO:0000269" key="37">
    <source>
    </source>
</evidence>
<evidence type="ECO:0000269" key="38">
    <source>
    </source>
</evidence>
<evidence type="ECO:0000269" key="39">
    <source>
    </source>
</evidence>
<evidence type="ECO:0000269" key="40">
    <source>
    </source>
</evidence>
<evidence type="ECO:0000269" key="41">
    <source>
    </source>
</evidence>
<evidence type="ECO:0000269" key="42">
    <source>
    </source>
</evidence>
<evidence type="ECO:0000269" key="43">
    <source>
    </source>
</evidence>
<evidence type="ECO:0000269" key="44">
    <source>
    </source>
</evidence>
<evidence type="ECO:0000269" key="45">
    <source>
    </source>
</evidence>
<evidence type="ECO:0000269" key="46">
    <source>
    </source>
</evidence>
<evidence type="ECO:0000303" key="47">
    <source>
    </source>
</evidence>
<evidence type="ECO:0000303" key="48">
    <source>
    </source>
</evidence>
<evidence type="ECO:0000303" key="49">
    <source>
    </source>
</evidence>
<evidence type="ECO:0000305" key="50"/>
<evidence type="ECO:0000305" key="51">
    <source>
    </source>
</evidence>
<evidence type="ECO:0000305" key="52">
    <source>
    </source>
</evidence>
<evidence type="ECO:0007744" key="53">
    <source>
        <dbReference type="PDB" id="4WZN"/>
    </source>
</evidence>
<evidence type="ECO:0007744" key="54">
    <source>
        <dbReference type="PDB" id="5WTE"/>
    </source>
</evidence>
<evidence type="ECO:0007744" key="55">
    <source>
        <dbReference type="PDB" id="5WTF"/>
    </source>
</evidence>
<evidence type="ECO:0007744" key="56">
    <source>
        <dbReference type="PDB" id="5WTH"/>
    </source>
</evidence>
<evidence type="ECO:0007829" key="57">
    <source>
        <dbReference type="PDB" id="1HAV"/>
    </source>
</evidence>
<evidence type="ECO:0007829" key="58">
    <source>
        <dbReference type="PDB" id="2HAL"/>
    </source>
</evidence>
<evidence type="ECO:0007829" key="59">
    <source>
        <dbReference type="PDB" id="4QPI"/>
    </source>
</evidence>
<evidence type="ECO:0007829" key="60">
    <source>
        <dbReference type="PDB" id="4WZN"/>
    </source>
</evidence>
<evidence type="ECO:0007829" key="61">
    <source>
        <dbReference type="PDB" id="5WTE"/>
    </source>
</evidence>
<evidence type="ECO:0007829" key="62">
    <source>
        <dbReference type="PDB" id="7XT3"/>
    </source>
</evidence>
<feature type="chain" id="PRO_0000308969" description="Genome polyprotein">
    <location>
        <begin position="1"/>
        <end position="2227"/>
    </location>
</feature>
<feature type="chain" id="PRO_0000308970" description="Capsid protein VP0">
    <location>
        <begin position="1"/>
        <end position="245"/>
    </location>
</feature>
<feature type="chain" id="PRO_0000039946" description="Capsid protein VP4">
    <location>
        <begin position="1"/>
        <end position="23"/>
    </location>
</feature>
<feature type="chain" id="PRO_0000039947" description="Capsid protein VP2">
    <location>
        <begin position="24"/>
        <end position="245"/>
    </location>
</feature>
<feature type="chain" id="PRO_0000039948" description="Capsid protein VP3">
    <location>
        <begin position="246"/>
        <end position="491"/>
    </location>
</feature>
<feature type="chain" id="PRO_0000308971" description="Protein VP1-2A">
    <location>
        <begin position="492"/>
        <end position="836"/>
    </location>
</feature>
<feature type="chain" id="PRO_0000039949" description="Capsid protein VP1">
    <location>
        <begin position="492"/>
        <end position="765"/>
    </location>
</feature>
<feature type="chain" id="PRO_0000039950" description="Assembly signal 2A">
    <location>
        <begin position="766"/>
        <end position="836"/>
    </location>
</feature>
<feature type="chain" id="PRO_0000308972" description="Protein 2BC">
    <location>
        <begin position="837"/>
        <end position="1422"/>
    </location>
</feature>
<feature type="chain" id="PRO_0000039951" description="Protein 2B">
    <location>
        <begin position="837"/>
        <end position="1087"/>
    </location>
</feature>
<feature type="chain" id="PRO_0000039952" description="Protein 2C">
    <location>
        <begin position="1088"/>
        <end position="1422"/>
    </location>
</feature>
<feature type="chain" id="PRO_0000308973" description="Protein 3ABCD">
    <location>
        <begin position="1423"/>
        <end position="2227"/>
    </location>
</feature>
<feature type="chain" id="PRO_0000308974" description="Protein 3ABC">
    <location>
        <begin position="1423"/>
        <end position="1738"/>
    </location>
</feature>
<feature type="chain" id="PRO_0000308975" description="Protein 3AB">
    <location>
        <begin position="1423"/>
        <end position="1519"/>
    </location>
</feature>
<feature type="chain" id="PRO_0000039953" description="Protein 3A">
    <location>
        <begin position="1423"/>
        <end position="1496"/>
    </location>
</feature>
<feature type="chain" id="PRO_0000039954" description="Viral protein genome-linked">
    <location>
        <begin position="1497"/>
        <end position="1519"/>
    </location>
</feature>
<feature type="chain" id="PRO_0000308976" description="Protein 3CD">
    <location>
        <begin position="1520"/>
        <end position="2227"/>
    </location>
</feature>
<feature type="chain" id="PRO_0000039955" description="Protease 3C">
    <location>
        <begin position="1520"/>
        <end position="1738"/>
    </location>
</feature>
<feature type="chain" id="PRO_0000039956" description="RNA-directed RNA polymerase 3D-POL">
    <location>
        <begin position="1739"/>
        <end position="2227"/>
    </location>
</feature>
<feature type="transmembrane region" description="Helical" evidence="3">
    <location>
        <begin position="1011"/>
        <end position="1031"/>
    </location>
</feature>
<feature type="transmembrane region" description="Helical" evidence="3 43">
    <location>
        <begin position="1462"/>
        <end position="1482"/>
    </location>
</feature>
<feature type="domain" description="SF3 helicase" evidence="5">
    <location>
        <begin position="1204"/>
        <end position="1366"/>
    </location>
</feature>
<feature type="domain" description="Peptidase C3" evidence="6">
    <location>
        <begin position="1514"/>
        <end position="1728"/>
    </location>
</feature>
<feature type="domain" description="RdRp catalytic" evidence="4">
    <location>
        <begin position="1976"/>
        <end position="2097"/>
    </location>
</feature>
<feature type="region of interest" description="Involved in P1-2A pentamerization" evidence="11 12">
    <location>
        <begin position="766"/>
        <end position="836"/>
    </location>
</feature>
<feature type="region of interest" description="Membrane-penetrating ability" evidence="28">
    <location>
        <begin position="1043"/>
        <end position="1070"/>
    </location>
</feature>
<feature type="short sequence motif" description="(L)YPX(n)L motif" evidence="23">
    <location>
        <begin position="167"/>
        <end position="171"/>
    </location>
</feature>
<feature type="short sequence motif" description="(L)YPX(n)L motif" evidence="23">
    <location>
        <begin position="200"/>
        <end position="205"/>
    </location>
</feature>
<feature type="active site" description="For protease 3C activity" evidence="6">
    <location>
        <position position="1563"/>
    </location>
</feature>
<feature type="active site" description="For protease 3C activity" evidence="6">
    <location>
        <position position="1603"/>
    </location>
</feature>
<feature type="active site" description="For protease 3C activity" evidence="6">
    <location>
        <position position="1691"/>
    </location>
</feature>
<feature type="binding site" evidence="5">
    <location>
        <begin position="1230"/>
        <end position="1237"/>
    </location>
    <ligand>
        <name>ATP</name>
        <dbReference type="ChEBI" id="CHEBI:30616"/>
    </ligand>
</feature>
<feature type="site" description="Cleavage; by protease 3C" evidence="47">
    <location>
        <begin position="245"/>
        <end position="246"/>
    </location>
</feature>
<feature type="site" description="Cleavage; by protease 3C" evidence="47">
    <location>
        <begin position="491"/>
        <end position="492"/>
    </location>
</feature>
<feature type="site" description="Cleavage; partial; by host" evidence="7 12">
    <location>
        <begin position="765"/>
        <end position="766"/>
    </location>
</feature>
<feature type="site" description="Important for VP1 folding and capsid assembly" evidence="12 21">
    <location>
        <position position="769"/>
    </location>
</feature>
<feature type="site" description="Cleavage; by protease 3C" evidence="32 33">
    <location>
        <begin position="836"/>
        <end position="837"/>
    </location>
</feature>
<feature type="site" description="Cleavage; by protease 3C" evidence="33">
    <location>
        <begin position="1087"/>
        <end position="1088"/>
    </location>
</feature>
<feature type="site" description="Cleavage; by protease 3C" evidence="47">
    <location>
        <begin position="1422"/>
        <end position="1423"/>
    </location>
</feature>
<feature type="site" description="Cleavage; by protease 3C" evidence="8">
    <location>
        <begin position="1496"/>
        <end position="1497"/>
    </location>
</feature>
<feature type="site" description="Cleavage; by protease 3C" evidence="8">
    <location>
        <begin position="1519"/>
        <end position="1520"/>
    </location>
</feature>
<feature type="site" description="Cleavage; by protease 3C" evidence="35">
    <location>
        <begin position="1738"/>
        <end position="1739"/>
    </location>
</feature>
<feature type="modified residue" description="O-(5'-phospho-RNA)-tyrosine" evidence="1">
    <location>
        <position position="1499"/>
    </location>
</feature>
<feature type="disulfide bond" description="Interchain" evidence="15">
    <location>
        <position position="1543"/>
    </location>
</feature>
<feature type="sequence variant" description="In strain: HM175/7, HM175/18f, HM175/24a and HM175/43c.">
    <original>K</original>
    <variation>R</variation>
    <location>
        <position position="77"/>
    </location>
</feature>
<feature type="sequence variant" description="In strain: HM175/24a and HM175/43c.">
    <original>D</original>
    <variation>A</variation>
    <location>
        <position position="315"/>
    </location>
</feature>
<feature type="sequence variant" description="In strain: HM175/18f.">
    <original>T</original>
    <variation>K</variation>
    <location>
        <position position="336"/>
    </location>
</feature>
<feature type="sequence variant" description="In strain: HM175/24a.">
    <original>I</original>
    <variation>V</variation>
    <location>
        <position position="638"/>
    </location>
</feature>
<feature type="sequence variant" description="In strain: HM175/24a and HM175/43c.">
    <original>N</original>
    <variation>S</variation>
    <location>
        <position position="688"/>
    </location>
</feature>
<feature type="sequence variant" description="In strain: HM175/18f.">
    <original>S</original>
    <variation>P</variation>
    <location>
        <position position="762"/>
    </location>
</feature>
<feature type="sequence variant" description="In strain: HM175/7.">
    <original>E</original>
    <variation>V</variation>
    <location>
        <position position="764"/>
    </location>
</feature>
<feature type="sequence variant" description="In strain: HM175/24a and HM175/43c.">
    <original>M</original>
    <variation>V</variation>
    <location>
        <position position="767"/>
    </location>
</feature>
<feature type="sequence variant" description="In strain: HM175/7.">
    <original>N</original>
    <variation>S</variation>
    <location>
        <position position="821"/>
    </location>
</feature>
<feature type="sequence variant" description="In strain: HM175/18f, HM175/24a and HM175/43c.">
    <original>K</original>
    <variation>N</variation>
    <location>
        <position position="838"/>
    </location>
</feature>
<feature type="sequence variant" description="In strain: HM175/18f, HM175/24a and HM175/43c.">
    <original>I</original>
    <variation>M</variation>
    <location>
        <position position="849"/>
    </location>
</feature>
<feature type="sequence variant" description="In 24.">
    <original>D</original>
    <variation>E</variation>
    <location>
        <position position="941"/>
    </location>
</feature>
<feature type="sequence variant" description="In strain: HM175/18f, HM175/24a and HM175/43c.">
    <original>D</original>
    <variation>H</variation>
    <location>
        <position position="993"/>
    </location>
</feature>
<feature type="sequence variant" description="In strain: HM175/7, HM175/18f, HM175/24a and HM175/43c.">
    <original>A</original>
    <variation>V</variation>
    <location>
        <position position="1052"/>
    </location>
</feature>
<feature type="sequence variant" description="In strain: HM175/7.">
    <original>G</original>
    <variation>A</variation>
    <location>
        <position position="1062"/>
    </location>
</feature>
<feature type="sequence variant" description="In strain: HM175/18f, HM175/24a and HM175/43c.">
    <original>AIY</original>
    <variation>GIC</variation>
    <location>
        <begin position="1109"/>
        <end position="1111"/>
    </location>
</feature>
<feature type="sequence variant" description="In strain: HM175/7.">
    <original>K</original>
    <variation>M</variation>
    <location>
        <position position="1118"/>
    </location>
</feature>
<feature type="sequence variant" description="In strain: HM175/7, HM175/18f, HM175/24a and HM175/43c.">
    <original>E</original>
    <variation>K</variation>
    <location>
        <position position="1151"/>
    </location>
</feature>
<feature type="sequence variant" description="In strain: HM175/7, HM175/18f, HM175/24a and HM175/43c.">
    <original>F</original>
    <variation>S</variation>
    <location>
        <position position="1163"/>
    </location>
</feature>
<feature type="sequence variant" description="In strain: HM175/18f, HM175/24a and HM175/43c.">
    <original>H</original>
    <variation>Y</variation>
    <location>
        <position position="1180"/>
    </location>
</feature>
<feature type="sequence variant" description="In strain: HM175/18f, HM175/24a and HM175/43c.">
    <original>S</original>
    <variation>F</variation>
    <location>
        <position position="1212"/>
    </location>
</feature>
<feature type="sequence variant" description="In strain: HM175/18f, HM175/24a and HM175/43c.">
    <original>Y</original>
    <variation>H</variation>
    <location>
        <position position="1229"/>
    </location>
</feature>
<feature type="sequence variant" description="In strain: HM175/7.">
    <original>V</original>
    <variation>I</variation>
    <location>
        <position position="1277"/>
    </location>
</feature>
<feature type="sequence variant" description="In strain: HM175/18f, HM175/24a and HM175/43c.">
    <original>E</original>
    <variation>D</variation>
    <location>
        <position position="1407"/>
    </location>
</feature>
<feature type="sequence variant" description="In strain: HM175/18f, HM175/24a and HM175/43c.">
    <location>
        <position position="1428"/>
    </location>
</feature>
<feature type="sequence variant" description="In strain: HM175/18f, HM175/24a and HM175/43c.">
    <original>F</original>
    <variation>V</variation>
    <location>
        <position position="1480"/>
    </location>
</feature>
<feature type="sequence variant" description="In strain: HM175/18f, HM175/24a and HM175/43c.">
    <original>R</original>
    <variation>H</variation>
    <location>
        <position position="1487"/>
    </location>
</feature>
<feature type="sequence variant" description="In strain: HM175/7.">
    <original>H</original>
    <variation>Y</variation>
    <location>
        <position position="1500"/>
    </location>
</feature>
<feature type="sequence variant" description="In strain: HM175/18f, HM175/24a and HM175/43c.">
    <original>Q</original>
    <variation>H</variation>
    <location>
        <position position="1507"/>
    </location>
</feature>
<feature type="sequence variant" description="In strain: HM175/43c.">
    <original>I</original>
    <variation>V</variation>
    <location>
        <position position="1524"/>
    </location>
</feature>
<feature type="sequence variant" description="In strain: HM175/18f and HM175/24a.">
    <original>Q</original>
    <variation>E</variation>
    <location>
        <position position="1620"/>
    </location>
</feature>
<feature type="sequence variant" description="In strain: HM175/43c.">
    <original>T</original>
    <variation>A</variation>
    <location>
        <position position="1675"/>
    </location>
</feature>
<feature type="sequence variant" description="In strain: HM175/7, HM175/18f, HM175/24a and HM175/43c.">
    <original>D</original>
    <variation>G</variation>
    <location>
        <position position="1805"/>
    </location>
</feature>
<feature type="sequence variant" description="In strain: HM175/7, HM175/18f, HM175/24a and HM175/43c.">
    <original>S</original>
    <variation>T</variation>
    <location>
        <position position="1930"/>
    </location>
</feature>
<feature type="sequence variant" description="In strain: HM175/18f, HM175/24a and HM175/43c.">
    <original>R</original>
    <variation>K</variation>
    <location>
        <position position="1962"/>
    </location>
</feature>
<feature type="mutagenesis site" description="Severely decreases virus release but does not impair viral RNA replication." evidence="23">
    <original>Y</original>
    <variation>A</variation>
    <location>
        <position position="167"/>
    </location>
</feature>
<feature type="mutagenesis site" description="Severely decreases virus release but does not impair viral RNA replication." evidence="23">
    <original>Y</original>
    <variation>A</variation>
    <location>
        <position position="200"/>
    </location>
</feature>
<feature type="mutagenesis site" description="Complete loss of viral particles assembly. Interferes with oligomerization of protein VP1-2A and maturation of procapsids." evidence="12 21">
    <original>R</original>
    <variation>M</variation>
    <location>
        <position position="769"/>
    </location>
</feature>
<feature type="mutagenesis site" description="Partial loss of VP1-2A-2B cleavage." evidence="32">
    <original>Q</original>
    <variation>N</variation>
    <location>
        <position position="836"/>
    </location>
</feature>
<feature type="mutagenesis site" description="Complete loss of VP1-2A-2B cleavage." evidence="32">
    <original>Q</original>
    <variation>R</variation>
    <location>
        <position position="836"/>
    </location>
</feature>
<feature type="mutagenesis site" description="10-20 fold increase in virus yield." evidence="13">
    <original>A</original>
    <variation>I</variation>
    <variation>L</variation>
    <variation>V</variation>
    <location>
        <position position="1052"/>
    </location>
</feature>
<feature type="mutagenesis site" description="Complete loss of protease 3C dimerization." evidence="15">
    <original>C</original>
    <variation>S</variation>
    <location>
        <position position="1543"/>
    </location>
</feature>
<feature type="mutagenesis site" description="Complete loss of enzymatic activity. Complete loss of cleavage of host TICAM1." evidence="22">
    <original>C</original>
    <variation>A</variation>
    <location>
        <position position="1691"/>
    </location>
</feature>
<feature type="mutagenesis site" description="Complete loss of proteolytic activity." evidence="15">
    <original>C</original>
    <variation>A</variation>
    <location>
        <position position="1691"/>
    </location>
</feature>
<feature type="sequence conflict" description="In Ref. 7; AAL66215." evidence="50" ref="7">
    <original>R</original>
    <variation>K</variation>
    <location>
        <position position="67"/>
    </location>
</feature>
<feature type="sequence conflict" description="In Ref. 4; AAA45476." evidence="50" ref="4">
    <original>D</original>
    <variation>V</variation>
    <location>
        <position position="1825"/>
    </location>
</feature>
<feature type="sequence conflict" description="In Ref. 4; AAA45476." evidence="50" ref="4">
    <original>G</original>
    <variation>R</variation>
    <location>
        <position position="1850"/>
    </location>
</feature>
<feature type="sequence conflict" description="In Ref. 4; AAA45476." evidence="50" ref="4">
    <original>E</original>
    <variation>G</variation>
    <location>
        <position position="1856"/>
    </location>
</feature>
<feature type="strand" evidence="59">
    <location>
        <begin position="38"/>
        <end position="42"/>
    </location>
</feature>
<feature type="strand" evidence="59">
    <location>
        <begin position="45"/>
        <end position="51"/>
    </location>
</feature>
<feature type="helix" evidence="59">
    <location>
        <begin position="76"/>
        <end position="80"/>
    </location>
</feature>
<feature type="strand" evidence="59">
    <location>
        <begin position="84"/>
        <end position="92"/>
    </location>
</feature>
<feature type="strand" evidence="59">
    <location>
        <begin position="100"/>
        <end position="104"/>
    </location>
</feature>
<feature type="helix" evidence="59">
    <location>
        <begin position="106"/>
        <end position="110"/>
    </location>
</feature>
<feature type="strand" evidence="61">
    <location>
        <begin position="111"/>
        <end position="115"/>
    </location>
</feature>
<feature type="helix" evidence="59">
    <location>
        <begin position="118"/>
        <end position="121"/>
    </location>
</feature>
<feature type="strand" evidence="59">
    <location>
        <begin position="124"/>
        <end position="137"/>
    </location>
</feature>
<feature type="strand" evidence="59">
    <location>
        <begin position="143"/>
        <end position="154"/>
    </location>
</feature>
<feature type="helix" evidence="59">
    <location>
        <begin position="161"/>
        <end position="166"/>
    </location>
</feature>
<feature type="strand" evidence="59">
    <location>
        <begin position="167"/>
        <end position="173"/>
    </location>
</feature>
<feature type="turn" evidence="59">
    <location>
        <begin position="174"/>
        <end position="176"/>
    </location>
</feature>
<feature type="strand" evidence="59">
    <location>
        <begin position="177"/>
        <end position="184"/>
    </location>
</feature>
<feature type="strand" evidence="59">
    <location>
        <begin position="189"/>
        <end position="197"/>
    </location>
</feature>
<feature type="strand" evidence="59">
    <location>
        <begin position="202"/>
        <end position="215"/>
    </location>
</feature>
<feature type="strand" evidence="61">
    <location>
        <begin position="217"/>
        <end position="219"/>
    </location>
</feature>
<feature type="strand" evidence="59">
    <location>
        <begin position="221"/>
        <end position="239"/>
    </location>
</feature>
<feature type="helix" evidence="59">
    <location>
        <begin position="265"/>
        <end position="268"/>
    </location>
</feature>
<feature type="strand" evidence="59">
    <location>
        <begin position="271"/>
        <end position="275"/>
    </location>
</feature>
<feature type="helix" evidence="59">
    <location>
        <begin position="276"/>
        <end position="278"/>
    </location>
</feature>
<feature type="helix" evidence="61">
    <location>
        <begin position="286"/>
        <end position="288"/>
    </location>
</feature>
<feature type="helix" evidence="59">
    <location>
        <begin position="297"/>
        <end position="300"/>
    </location>
</feature>
<feature type="strand" evidence="59">
    <location>
        <begin position="304"/>
        <end position="312"/>
    </location>
</feature>
<feature type="strand" evidence="59">
    <location>
        <begin position="320"/>
        <end position="325"/>
    </location>
</feature>
<feature type="turn" evidence="59">
    <location>
        <begin position="336"/>
        <end position="339"/>
    </location>
</feature>
<feature type="helix" evidence="59">
    <location>
        <begin position="345"/>
        <end position="350"/>
    </location>
</feature>
<feature type="strand" evidence="59">
    <location>
        <begin position="353"/>
        <end position="367"/>
    </location>
</feature>
<feature type="strand" evidence="59">
    <location>
        <begin position="373"/>
        <end position="383"/>
    </location>
</feature>
<feature type="strand" evidence="61">
    <location>
        <begin position="385"/>
        <end position="387"/>
    </location>
</feature>
<feature type="helix" evidence="59">
    <location>
        <begin position="394"/>
        <end position="397"/>
    </location>
</feature>
<feature type="strand" evidence="59">
    <location>
        <begin position="400"/>
        <end position="406"/>
    </location>
</feature>
<feature type="strand" evidence="59">
    <location>
        <begin position="408"/>
        <end position="410"/>
    </location>
</feature>
<feature type="strand" evidence="59">
    <location>
        <begin position="413"/>
        <end position="418"/>
    </location>
</feature>
<feature type="strand" evidence="59">
    <location>
        <begin position="423"/>
        <end position="428"/>
    </location>
</feature>
<feature type="helix" evidence="59">
    <location>
        <begin position="430"/>
        <end position="432"/>
    </location>
</feature>
<feature type="strand" evidence="59">
    <location>
        <begin position="433"/>
        <end position="435"/>
    </location>
</feature>
<feature type="strand" evidence="59">
    <location>
        <begin position="444"/>
        <end position="456"/>
    </location>
</feature>
<feature type="strand" evidence="59">
    <location>
        <begin position="459"/>
        <end position="461"/>
    </location>
</feature>
<feature type="strand" evidence="59">
    <location>
        <begin position="463"/>
        <end position="481"/>
    </location>
</feature>
<feature type="strand" evidence="61">
    <location>
        <begin position="532"/>
        <end position="534"/>
    </location>
</feature>
<feature type="helix" evidence="61">
    <location>
        <begin position="540"/>
        <end position="542"/>
    </location>
</feature>
<feature type="turn" evidence="61">
    <location>
        <begin position="549"/>
        <end position="553"/>
    </location>
</feature>
<feature type="strand" evidence="61">
    <location>
        <begin position="568"/>
        <end position="571"/>
    </location>
</feature>
<feature type="helix" evidence="61">
    <location>
        <begin position="576"/>
        <end position="579"/>
    </location>
</feature>
<feature type="strand" evidence="61">
    <location>
        <begin position="584"/>
        <end position="591"/>
    </location>
</feature>
<feature type="strand" evidence="61">
    <location>
        <begin position="593"/>
        <end position="603"/>
    </location>
</feature>
<feature type="strand" evidence="61">
    <location>
        <begin position="606"/>
        <end position="608"/>
    </location>
</feature>
<feature type="helix" evidence="61">
    <location>
        <begin position="616"/>
        <end position="621"/>
    </location>
</feature>
<feature type="turn" evidence="61">
    <location>
        <begin position="622"/>
        <end position="624"/>
    </location>
</feature>
<feature type="strand" evidence="61">
    <location>
        <begin position="625"/>
        <end position="630"/>
    </location>
</feature>
<feature type="strand" evidence="61">
    <location>
        <begin position="632"/>
        <end position="640"/>
    </location>
</feature>
<feature type="strand" evidence="61">
    <location>
        <begin position="645"/>
        <end position="651"/>
    </location>
</feature>
<feature type="strand" evidence="61">
    <location>
        <begin position="662"/>
        <end position="664"/>
    </location>
</feature>
<feature type="helix" evidence="61">
    <location>
        <begin position="670"/>
        <end position="675"/>
    </location>
</feature>
<feature type="strand" evidence="61">
    <location>
        <begin position="679"/>
        <end position="682"/>
    </location>
</feature>
<feature type="turn" evidence="61">
    <location>
        <begin position="683"/>
        <end position="685"/>
    </location>
</feature>
<feature type="strand" evidence="61">
    <location>
        <begin position="687"/>
        <end position="693"/>
    </location>
</feature>
<feature type="strand" evidence="61">
    <location>
        <begin position="698"/>
        <end position="700"/>
    </location>
</feature>
<feature type="helix" evidence="61">
    <location>
        <begin position="708"/>
        <end position="714"/>
    </location>
</feature>
<feature type="strand" evidence="61">
    <location>
        <begin position="716"/>
        <end position="725"/>
    </location>
</feature>
<feature type="strand" evidence="61">
    <location>
        <begin position="734"/>
        <end position="742"/>
    </location>
</feature>
<feature type="strand" evidence="61">
    <location>
        <begin position="747"/>
        <end position="751"/>
    </location>
</feature>
<feature type="strand" evidence="60">
    <location>
        <begin position="840"/>
        <end position="846"/>
    </location>
</feature>
<feature type="strand" evidence="60">
    <location>
        <begin position="850"/>
        <end position="853"/>
    </location>
</feature>
<feature type="strand" evidence="60">
    <location>
        <begin position="856"/>
        <end position="859"/>
    </location>
</feature>
<feature type="strand" evidence="60">
    <location>
        <begin position="861"/>
        <end position="872"/>
    </location>
</feature>
<feature type="strand" evidence="60">
    <location>
        <begin position="878"/>
        <end position="883"/>
    </location>
</feature>
<feature type="strand" evidence="60">
    <location>
        <begin position="886"/>
        <end position="893"/>
    </location>
</feature>
<feature type="strand" evidence="60">
    <location>
        <begin position="900"/>
        <end position="902"/>
    </location>
</feature>
<feature type="helix" evidence="60">
    <location>
        <begin position="905"/>
        <end position="914"/>
    </location>
</feature>
<feature type="helix" evidence="60">
    <location>
        <begin position="932"/>
        <end position="938"/>
    </location>
</feature>
<feature type="helix" evidence="60">
    <location>
        <begin position="947"/>
        <end position="957"/>
    </location>
</feature>
<feature type="strand" evidence="60">
    <location>
        <begin position="960"/>
        <end position="963"/>
    </location>
</feature>
<feature type="helix" evidence="60">
    <location>
        <begin position="964"/>
        <end position="968"/>
    </location>
</feature>
<feature type="strand" evidence="62">
    <location>
        <begin position="1225"/>
        <end position="1229"/>
    </location>
</feature>
<feature type="helix" evidence="62">
    <location>
        <begin position="1236"/>
        <end position="1250"/>
    </location>
</feature>
<feature type="helix" evidence="62">
    <location>
        <begin position="1255"/>
        <end position="1257"/>
    </location>
</feature>
<feature type="strand" evidence="62">
    <location>
        <begin position="1258"/>
        <end position="1264"/>
    </location>
</feature>
<feature type="turn" evidence="62">
    <location>
        <begin position="1266"/>
        <end position="1271"/>
    </location>
</feature>
<feature type="strand" evidence="62">
    <location>
        <begin position="1276"/>
        <end position="1283"/>
    </location>
</feature>
<feature type="helix" evidence="62">
    <location>
        <begin position="1292"/>
        <end position="1300"/>
    </location>
</feature>
<feature type="strand" evidence="62">
    <location>
        <begin position="1322"/>
        <end position="1329"/>
    </location>
</feature>
<feature type="strand" evidence="62">
    <location>
        <begin position="1347"/>
        <end position="1355"/>
    </location>
</feature>
<feature type="helix" evidence="62">
    <location>
        <begin position="1357"/>
        <end position="1359"/>
    </location>
</feature>
<feature type="strand" evidence="62">
    <location>
        <begin position="1362"/>
        <end position="1367"/>
    </location>
</feature>
<feature type="helix" evidence="62">
    <location>
        <begin position="1369"/>
        <end position="1374"/>
    </location>
</feature>
<feature type="strand" evidence="62">
    <location>
        <begin position="1384"/>
        <end position="1388"/>
    </location>
</feature>
<feature type="strand" evidence="62">
    <location>
        <begin position="1391"/>
        <end position="1393"/>
    </location>
</feature>
<feature type="helix" evidence="62">
    <location>
        <begin position="1395"/>
        <end position="1410"/>
    </location>
</feature>
<feature type="helix" evidence="62">
    <location>
        <begin position="1414"/>
        <end position="1421"/>
    </location>
</feature>
<feature type="helix" evidence="58">
    <location>
        <begin position="1521"/>
        <end position="1531"/>
    </location>
</feature>
<feature type="strand" evidence="58">
    <location>
        <begin position="1532"/>
        <end position="1539"/>
    </location>
</feature>
<feature type="strand" evidence="58">
    <location>
        <begin position="1545"/>
        <end position="1555"/>
    </location>
</feature>
<feature type="strand" evidence="58">
    <location>
        <begin position="1557"/>
        <end position="1561"/>
    </location>
</feature>
<feature type="helix" evidence="58">
    <location>
        <begin position="1562"/>
        <end position="1564"/>
    </location>
</feature>
<feature type="turn" evidence="58">
    <location>
        <begin position="1565"/>
        <end position="1567"/>
    </location>
</feature>
<feature type="helix" evidence="58">
    <location>
        <begin position="1571"/>
        <end position="1573"/>
    </location>
</feature>
<feature type="strand" evidence="58">
    <location>
        <begin position="1574"/>
        <end position="1580"/>
    </location>
</feature>
<feature type="strand" evidence="58">
    <location>
        <begin position="1583"/>
        <end position="1588"/>
    </location>
</feature>
<feature type="helix" evidence="58">
    <location>
        <begin position="1589"/>
        <end position="1591"/>
    </location>
</feature>
<feature type="strand" evidence="58">
    <location>
        <begin position="1592"/>
        <end position="1595"/>
    </location>
</feature>
<feature type="strand" evidence="58">
    <location>
        <begin position="1597"/>
        <end position="1600"/>
    </location>
</feature>
<feature type="strand" evidence="58">
    <location>
        <begin position="1603"/>
        <end position="1608"/>
    </location>
</feature>
<feature type="helix" evidence="58">
    <location>
        <begin position="1619"/>
        <end position="1621"/>
    </location>
</feature>
<feature type="helix" evidence="58">
    <location>
        <begin position="1625"/>
        <end position="1630"/>
    </location>
</feature>
<feature type="turn" evidence="58">
    <location>
        <begin position="1631"/>
        <end position="1633"/>
    </location>
</feature>
<feature type="strand" evidence="58">
    <location>
        <begin position="1636"/>
        <end position="1642"/>
    </location>
</feature>
<feature type="strand" evidence="58">
    <location>
        <begin position="1645"/>
        <end position="1651"/>
    </location>
</feature>
<feature type="strand" evidence="58">
    <location>
        <begin position="1655"/>
        <end position="1665"/>
    </location>
</feature>
<feature type="strand" evidence="57">
    <location>
        <begin position="1667"/>
        <end position="1669"/>
    </location>
</feature>
<feature type="strand" evidence="58">
    <location>
        <begin position="1671"/>
        <end position="1683"/>
    </location>
</feature>
<feature type="strand" evidence="58">
    <location>
        <begin position="1694"/>
        <end position="1698"/>
    </location>
</feature>
<feature type="helix" evidence="58">
    <location>
        <begin position="1700"/>
        <end position="1702"/>
    </location>
</feature>
<feature type="strand" evidence="58">
    <location>
        <begin position="1706"/>
        <end position="1714"/>
    </location>
</feature>
<feature type="strand" evidence="58">
    <location>
        <begin position="1717"/>
        <end position="1722"/>
    </location>
</feature>
<feature type="helix" evidence="58">
    <location>
        <begin position="1725"/>
        <end position="1730"/>
    </location>
</feature>
<sequence length="2227" mass="251508">MNMSRQGIFQTVGSGLDHILSLADIEEEQMIQSVDRTAVTGASYFTSVDQSSVHTAEVGSHQVEPLRTSVDKPGSKKTQGEKFFLIHSADWLTTHALFHEVAKLDVVKLLYNEQFAVQGLLRYHTYARFGIEIQVQINPTPFQQGGLICAMVPGDQSYGSIASLTVYPHGLLNCNINNVVRIKVPFIYTRGAYHFKDPQYPVWELTIRVWSELNIGTGTSAYTSLNVLARFTDLELHGLTPLSTQMMRNEFRVSTTENVVNLSNYEDARAKMSFALDQEDWKSDPSQGGGIKITHFTTWTSIPTLAAQFPFNASDSVGQQIKVIPVDPYFFQMTNTNPDQKCITALASICQMFCFWRGDLVFDFQVFPTKYHSGRLLFCFVPGNELIDVSGITLKQATTAPCAVMDITGVQSTLRFRVPWISDTPYRVNRYTKSAHQKGEYTAIGKLIVYCYNRLTSPSNVASHVRVNVYLSAINLECFAPLYHAMDVTTQVGDDSGGFSTTVSTEQNVPDPQVGITTMKDLKGKANRGKMDVSGVQAPVGAITTIEDPVLAKKVPETFPELKPGESRHTSDHMSIYKFMGRSHFLCTFTFNSNNKEYTFPITLSSTSNPPHGLPSTLRWFFNLFQLYRGPLDLTIIITGATDVDGMAWFTPVGLAVDTPWVEKESALSIDYKTALGAVRFNTRRTGNIQIRLPWYSYLYAVSGALDGLGDKTDSTFGLVSIQIANYNHSDEYLSFSCYLSVTEQSEFYFPRAPLNSNAMLSTESMMSRIAAGDLESSVDDPRSEEDKRFESHIECRKPYKELRLEVGKQRLKYAQEELSNEVLPPPRKMKGLFSQAKISLFYTEEHEIMKFSWRGVTADTRALRRFGFSLAAGRSVWTLEMDAGVLTGRLIRLNDEKWTEMKDDKIVSLIEKFTSNKYWSKVNFPHGMLDLEEIAANSKDFPNMSETDLCFLLHWLNPKKINLADRMLGLSGVQEIKEQGVGLIAECRTFLDSIAGTLKSMMFGFHHSVTVEIINTVLCFVKSGILLYVIQQLNQDEHSHIIGLLRVMNYADIGCSVISCGKVFSKMLETVFNWQMDSRMMELRTQSFSNWLRDICSGITIFKNFKDAIYWLYTKLKDFYEVNYGKKKDILNILKDNQQKIEKAIEEADEFCILQIQDVEKFEQYQKGVDLIQKLRTVHSMAQVDPNLMVHLSPLRDCIARVHQKLKNLGSINQAMVTRCEPVVCYLYGKRGGGKSLTSIALATKICKHYGVEPEKNIYTKPVASDYWDGYSGQLVCIIDDIGQNTTDEDWSDFCQLVSGCPMRLNMASLEEKGRHFSSPFIIATSNWSNPSPKTVYVKEAIDRRLHFKVEVKPASFFKNPHNDMLNVNLAKTNDAIKDMSCVDLIMDGHNVSLMDLLSSLVMTVEIRKQNMTEFMELWSQGISDDDNDSAVAEFFQSFPSGEPSNSKLSGFFQSVTNHKWVAVGAAVGILGVLVGGWFVYKHFSRKEEEPIPAEGVYHGVTKPKQVIKLDADPVESQSTLEIAGLVRKNLVQFGVGEKNGCVRWVMNALGVKDDWLLVPSHAYKFEKDYEMMEFYFNRGGTYYSISAGNVVIQSLDVGFQDVVLMKVPTIPKFRDITQHFIKKGDVPRALNRLATLVTTVNGTPMLISEGPLKMEEKATYVHKKNDGTTVDLTVDQAWRGKGEGLPGMCGGALVSSNQSIQNAILGIHVAGGNSILVAKLVTQEMFQNIDKKIESQRIMKVEFTQCSMNVVSKTLFRKSPIYHHIDKTMINFPAAMPFSKAEIDPMAVMLSKYSLPIVEEPEDYKEASIFYQNKIVGKTQLVDDFLDLDMAITGAPGIDAINMDSSPGFPYVQEKLTKRDLIWLDENGLLLGVHPRLAQRILFNTVMMENCSDLDVVFTTCPKDELRPLEKVLESKTRAIDACPLDYSILCRMYWGPAISYFHLNPGFHTGVAIGIDPDRQWDELFKTMIRFGDVGLDLDFSAFDASLSPFMIREAGRIMSELSGTPSHFGTALINTIIYSKHLLYNCCYHVCGSMPSGSPCTALLNSIINNVNLYYVFSKIFGKSPVFFCQALKILCYGDDVLIVFSRDVQIDNLDLIGQKIVDEFKKLGMTATSADKNVPQLKPVSELTFLKRSFNLVEDRIRPAISEKTIWSLIAWQRSNAEFEQNLENAQWFAFMHGYEFYQKFYYFVQSCLEKEMIEYRLKSYDWWRMRFYDQCFICDLS</sequence>